<comment type="function">
    <text evidence="12">NF-kappa-B is a pleiotropic transcription factor present in almost all cell types and is the endpoint of a series of signal transduction events that are initiated by a vast array of stimuli related to many biological processes such as inflammation, immunity, differentiation, cell growth, tumorigenesis and apoptosis. NF-kappa-B is a homo- or heterodimeric complex formed by the Rel-like domain-containing proteins RELA/p65, RELB, NFKB1/p105, NFKB1/p50, REL and NFKB2/p52. The dimers bind at kappa-B sites in the DNA of their target genes and the individual dimers have distinct preferences for different kappa-B sites that they can bind with distinguishable affinity and specificity. Different dimer combinations act as transcriptional activators or repressors, respectively. NF-kappa-B is controlled by various mechanisms of post-translational modification and subcellular compartmentalization as well as by interactions with other cofactors or corepressors. NF-kappa-B complexes are held in the cytoplasm in an inactive state complexed with members of the NF-kappa-B inhibitor (I-kappa-B) family. In a conventional activation pathway, I-kappa-B is phosphorylated by I-kappa-B kinases (IKKs) in response to different activators, subsequently degraded thus liberating the active NF-kappa-B complex which translocates to the nucleus. In a non-canonical activation pathway, the MAP3K14-activated CHUK/IKKA homodimer phosphorylates NFKB2/p100 associated with RelB, inducing its proteolytic processing to NFKB2/p52 and the formation of NF-kappa-B RelB-p52 complexes. The NF-kappa-B heterodimeric RelB-p52 complex is a transcriptional activator. The NF-kappa-B p52-p52 homodimer is a transcriptional repressor. NFKB2 appears to have dual functions such as cytoplasmic retention of attached NF-kappa-B proteins by p100 and generation of p52 by a cotranslational processing. The proteasome-mediated process ensures the production of both p52 and p100 and preserves their independent function. p52 binds to the kappa-B consensus sequence 5'-GGRNNYYCC-3', located in the enhancer region of genes involved in immune response and acute phase reactions. p52 and p100 are respectively the minor and major form; the processing of p100 being relatively poor. Isoform p49 is a subunit of the NF-kappa-B protein complex, which stimulates the HIV enhancer in synergy with p65. In concert with RELB, regulates the circadian clock by repressing the transcriptional activator activity of the CLOCK-BMAL1 heterodimer.</text>
</comment>
<comment type="subunit">
    <text evidence="6 8 12 13 14 16">Component of the NF-kappa-B RelB-p52 complex. Homodimer; component of the NF-kappa-B p52-p52 complex. Component of the NF-kappa-B p65-p52 complex. Component of the NF-kappa-B p52-c-Rel complex. NFKB2/p52 interacts with NFKBIE. Component of a complex consisting of the NF-kappa-B p50-p50 homodimer and BCL3. Directly interacts with MEN1.</text>
</comment>
<comment type="interaction">
    <interactant intactId="EBI-307326">
        <id>Q00653</id>
    </interactant>
    <interactant intactId="EBI-354900">
        <id>P41279</id>
        <label>MAP3K8</label>
    </interactant>
    <organismsDiffer>false</organismsDiffer>
    <experiments>2</experiments>
</comment>
<comment type="interaction">
    <interactant intactId="EBI-307326">
        <id>Q00653</id>
    </interactant>
    <interactant intactId="EBI-300010">
        <id>P19838</id>
        <label>NFKB1</label>
    </interactant>
    <organismsDiffer>false</organismsDiffer>
    <experiments>10</experiments>
</comment>
<comment type="interaction">
    <interactant intactId="EBI-307326">
        <id>Q00653</id>
    </interactant>
    <interactant intactId="EBI-307386">
        <id>P25963</id>
        <label>NFKBIA</label>
    </interactant>
    <organismsDiffer>false</organismsDiffer>
    <experiments>4</experiments>
</comment>
<comment type="interaction">
    <interactant intactId="EBI-307326">
        <id>Q00653</id>
    </interactant>
    <interactant intactId="EBI-352889">
        <id>Q15653</id>
        <label>NFKBIB</label>
    </interactant>
    <organismsDiffer>false</organismsDiffer>
    <experiments>3</experiments>
</comment>
<comment type="interaction">
    <interactant intactId="EBI-307326">
        <id>Q00653</id>
    </interactant>
    <interactant intactId="EBI-307352">
        <id>Q04864</id>
        <label>REL</label>
    </interactant>
    <organismsDiffer>false</organismsDiffer>
    <experiments>5</experiments>
</comment>
<comment type="interaction">
    <interactant intactId="EBI-307326">
        <id>Q00653</id>
    </interactant>
    <interactant intactId="EBI-357837">
        <id>Q01201</id>
        <label>RELB</label>
    </interactant>
    <organismsDiffer>false</organismsDiffer>
    <experiments>5</experiments>
</comment>
<comment type="interaction">
    <interactant intactId="EBI-307326">
        <id>Q00653</id>
    </interactant>
    <interactant intactId="EBI-80140">
        <id>P63165</id>
        <label>SUMO1</label>
    </interactant>
    <organismsDiffer>false</organismsDiffer>
    <experiments>2</experiments>
</comment>
<comment type="interaction">
    <interactant intactId="EBI-9869360">
        <id>PRO_0000030322</id>
    </interactant>
    <interactant intactId="EBI-9869387">
        <id>O00255-2</id>
        <label>MEN1</label>
    </interactant>
    <organismsDiffer>false</organismsDiffer>
    <experiments>3</experiments>
</comment>
<comment type="subcellular location">
    <subcellularLocation>
        <location>Nucleus</location>
    </subcellularLocation>
    <subcellularLocation>
        <location>Cytoplasm</location>
    </subcellularLocation>
    <text>Nuclear, but also found in the cytoplasm in an inactive form complexed to an inhibitor (I-kappa-B).</text>
</comment>
<comment type="alternative products">
    <event type="alternative splicing"/>
    <isoform>
        <id>Q00653-1</id>
        <name>1</name>
        <name>p100</name>
        <sequence type="displayed"/>
    </isoform>
    <isoform>
        <id>Q00653-3</id>
        <name>3</name>
        <name>p49</name>
        <sequence type="described" ref="VSP_040082 VSP_040083"/>
    </isoform>
    <isoform>
        <id>Q00653-4</id>
        <name>4</name>
        <sequence type="described" ref="VSP_040084"/>
    </isoform>
</comment>
<comment type="domain">
    <text evidence="1">The C-terminus of p100 might be involved in cytoplasmic retention, inhibition of DNA-binding by p52 homodimers, and/or transcription activation.</text>
</comment>
<comment type="domain">
    <text>The glycine-rich region (GRR) appears to be a critical element in the generation of p52.</text>
</comment>
<comment type="PTM">
    <text>While translation occurs, the particular unfolded structure after the GRR repeat promotes the generation of p52 making it an acceptable substrate for the proteasome. This process is known as cotranslational processing. The processed form is active and the unprocessed form acts as an inhibitor (I kappa B-like), being able to form cytosolic complexes with NF-kappa B, trapping it in the cytoplasm. Complete folding of the region downstream of the GRR repeat precludes processing.</text>
</comment>
<comment type="PTM">
    <text evidence="5 7 15">Subsequent to MAP3K14-dependent serine phosphorylation, p100 polyubiquitination occurs then triggering its proteasome-dependent processing.</text>
</comment>
<comment type="PTM">
    <text>Constitutive processing is tightly suppressed by its C-terminal processing inhibitory domain, named PID, which contains the death domain.</text>
</comment>
<comment type="PTM">
    <text evidence="11">Ubiquitinated by TRIM55; leading to processing by VCP and subsequent ubiquitin-dependent protein degradation by the proteasome.</text>
</comment>
<comment type="disease">
    <text>A chromosomal aberration involving NFKB2 is found in a case of B-cell non Hodgkin lymphoma (B-NHL). Translocation t(10;14)(q24;q32) with IGHA1. The resulting oncogene is also called Lyt-10C alpha variant.</text>
</comment>
<comment type="disease">
    <text>A chromosomal aberration involving NFKB2 is found in a cutaneous T-cell leukemia (C-TCL) cell line. This rearrangement produces the p80HT gene which codes for a truncated 80 kDa protein (p80HT).</text>
</comment>
<comment type="disease">
    <text>In B-cell leukemia (B-CLL) cell line, LB40 and EB308, can be found after heterogeneous chromosomal aberrations, such as internal deletions.</text>
</comment>
<comment type="disease" evidence="9 10">
    <disease id="DI-03979">
        <name>Immunodeficiency, common variable, 10</name>
        <acronym>CVID10</acronym>
        <description>A primary immunodeficiency characterized by childhood-onset of recurrent infections, hypogammaglobulinemia, and decreased numbers of memory and marginal zone B-cells. Some patients may develop autoimmune features and have circulating autoantibodies. An unusual feature is central adrenal insufficiency.</description>
        <dbReference type="MIM" id="615577"/>
    </disease>
    <text>The disease is caused by variants affecting the gene represented in this entry.</text>
</comment>
<comment type="sequence caution" evidence="22">
    <conflict type="frameshift">
        <sequence resource="EMBL-CDS" id="CAA43715"/>
    </conflict>
</comment>
<comment type="sequence caution" evidence="22">
    <molecule>Isoform 3</molecule>
    <conflict type="frameshift">
        <sequence resource="EMBL-CDS" id="CAA43716"/>
    </conflict>
</comment>
<comment type="online information" name="Atlas of Genetics and Cytogenetics in Oncology and Haematology">
    <link uri="https://atlasgeneticsoncology.org/gene/362/NFKB2"/>
</comment>
<evidence type="ECO:0000250" key="1"/>
<evidence type="ECO:0000255" key="2"/>
<evidence type="ECO:0000255" key="3">
    <source>
        <dbReference type="PROSITE-ProRule" id="PRU00265"/>
    </source>
</evidence>
<evidence type="ECO:0000256" key="4">
    <source>
        <dbReference type="SAM" id="MobiDB-lite"/>
    </source>
</evidence>
<evidence type="ECO:0000269" key="5">
    <source>
    </source>
</evidence>
<evidence type="ECO:0000269" key="6">
    <source>
    </source>
</evidence>
<evidence type="ECO:0000269" key="7">
    <source>
    </source>
</evidence>
<evidence type="ECO:0000269" key="8">
    <source>
    </source>
</evidence>
<evidence type="ECO:0000269" key="9">
    <source>
    </source>
</evidence>
<evidence type="ECO:0000269" key="10">
    <source>
    </source>
</evidence>
<evidence type="ECO:0000269" key="11">
    <source>
    </source>
</evidence>
<evidence type="ECO:0000269" key="12">
    <source>
    </source>
</evidence>
<evidence type="ECO:0000269" key="13">
    <source>
    </source>
</evidence>
<evidence type="ECO:0000269" key="14">
    <source>
    </source>
</evidence>
<evidence type="ECO:0000269" key="15">
    <source>
    </source>
</evidence>
<evidence type="ECO:0000269" key="16">
    <source>
    </source>
</evidence>
<evidence type="ECO:0000269" key="17">
    <source ref="7"/>
</evidence>
<evidence type="ECO:0000303" key="18">
    <source>
    </source>
</evidence>
<evidence type="ECO:0000303" key="19">
    <source>
    </source>
</evidence>
<evidence type="ECO:0000303" key="20">
    <source>
    </source>
</evidence>
<evidence type="ECO:0000303" key="21">
    <source ref="5"/>
</evidence>
<evidence type="ECO:0000305" key="22"/>
<evidence type="ECO:0007744" key="23">
    <source>
    </source>
</evidence>
<evidence type="ECO:0007744" key="24">
    <source>
    </source>
</evidence>
<evidence type="ECO:0007829" key="25">
    <source>
        <dbReference type="PDB" id="1A3Q"/>
    </source>
</evidence>
<evidence type="ECO:0007829" key="26">
    <source>
        <dbReference type="PDB" id="2D96"/>
    </source>
</evidence>
<evidence type="ECO:0007829" key="27">
    <source>
        <dbReference type="PDB" id="3DO7"/>
    </source>
</evidence>
<evidence type="ECO:0007829" key="28">
    <source>
        <dbReference type="PDB" id="4OT9"/>
    </source>
</evidence>
<evidence type="ECO:0007829" key="29">
    <source>
        <dbReference type="PDB" id="7CLI"/>
    </source>
</evidence>
<evidence type="ECO:0007829" key="30">
    <source>
        <dbReference type="PDB" id="7W7L"/>
    </source>
</evidence>
<dbReference type="EMBL" id="X61498">
    <property type="protein sequence ID" value="CAA43715.1"/>
    <property type="status" value="ALT_FRAME"/>
    <property type="molecule type" value="mRNA"/>
</dbReference>
<dbReference type="EMBL" id="X61499">
    <property type="protein sequence ID" value="CAA43716.1"/>
    <property type="status" value="ALT_FRAME"/>
    <property type="molecule type" value="mRNA"/>
</dbReference>
<dbReference type="EMBL" id="S76638">
    <property type="protein sequence ID" value="AAB21124.1"/>
    <property type="molecule type" value="mRNA"/>
</dbReference>
<dbReference type="EMBL" id="U09609">
    <property type="protein sequence ID" value="AAA21462.2"/>
    <property type="molecule type" value="mRNA"/>
</dbReference>
<dbReference type="EMBL" id="BT009769">
    <property type="protein sequence ID" value="AAP88771.1"/>
    <property type="molecule type" value="mRNA"/>
</dbReference>
<dbReference type="EMBL" id="AK292654">
    <property type="protein sequence ID" value="BAF85343.1"/>
    <property type="molecule type" value="mRNA"/>
</dbReference>
<dbReference type="EMBL" id="AY865619">
    <property type="protein sequence ID" value="AAW56071.1"/>
    <property type="molecule type" value="Genomic_DNA"/>
</dbReference>
<dbReference type="EMBL" id="AL121928">
    <property type="status" value="NOT_ANNOTATED_CDS"/>
    <property type="molecule type" value="Genomic_DNA"/>
</dbReference>
<dbReference type="EMBL" id="CH471066">
    <property type="protein sequence ID" value="EAW49700.1"/>
    <property type="molecule type" value="Genomic_DNA"/>
</dbReference>
<dbReference type="EMBL" id="CH471066">
    <property type="protein sequence ID" value="EAW49701.1"/>
    <property type="molecule type" value="Genomic_DNA"/>
</dbReference>
<dbReference type="EMBL" id="CH471066">
    <property type="protein sequence ID" value="EAW49702.1"/>
    <property type="molecule type" value="Genomic_DNA"/>
</dbReference>
<dbReference type="EMBL" id="CH471066">
    <property type="protein sequence ID" value="EAW49704.1"/>
    <property type="molecule type" value="Genomic_DNA"/>
</dbReference>
<dbReference type="EMBL" id="CH471066">
    <property type="protein sequence ID" value="EAW49706.1"/>
    <property type="molecule type" value="Genomic_DNA"/>
</dbReference>
<dbReference type="EMBL" id="BC002844">
    <property type="protein sequence ID" value="AAH02844.1"/>
    <property type="molecule type" value="mRNA"/>
</dbReference>
<dbReference type="EMBL" id="U20816">
    <property type="protein sequence ID" value="AAA68171.1"/>
    <property type="molecule type" value="Genomic_DNA"/>
</dbReference>
<dbReference type="CCDS" id="CCDS41564.1">
    <molecule id="Q00653-1"/>
</dbReference>
<dbReference type="CCDS" id="CCDS41565.1">
    <molecule id="Q00653-4"/>
</dbReference>
<dbReference type="PIR" id="A42024">
    <property type="entry name" value="A42024"/>
</dbReference>
<dbReference type="PIR" id="A57034">
    <property type="entry name" value="A57034"/>
</dbReference>
<dbReference type="PIR" id="I38609">
    <property type="entry name" value="I38609"/>
</dbReference>
<dbReference type="PIR" id="S17233">
    <property type="entry name" value="S17233"/>
</dbReference>
<dbReference type="RefSeq" id="NP_001070962.1">
    <molecule id="Q00653-1"/>
    <property type="nucleotide sequence ID" value="NM_001077494.3"/>
</dbReference>
<dbReference type="RefSeq" id="NP_001248332.1">
    <molecule id="Q00653-4"/>
    <property type="nucleotide sequence ID" value="NM_001261403.3"/>
</dbReference>
<dbReference type="RefSeq" id="NP_001275653.1">
    <molecule id="Q00653-4"/>
    <property type="nucleotide sequence ID" value="NM_001288724.1"/>
</dbReference>
<dbReference type="RefSeq" id="NP_001309863.1">
    <molecule id="Q00653-1"/>
    <property type="nucleotide sequence ID" value="NM_001322934.2"/>
</dbReference>
<dbReference type="RefSeq" id="NP_001309864.1">
    <property type="nucleotide sequence ID" value="NM_001322935.1"/>
</dbReference>
<dbReference type="RefSeq" id="NP_002493.3">
    <molecule id="Q00653-4"/>
    <property type="nucleotide sequence ID" value="NM_002502.5"/>
</dbReference>
<dbReference type="PDB" id="1A3Q">
    <property type="method" value="X-ray"/>
    <property type="resolution" value="2.10 A"/>
    <property type="chains" value="A/B=37-327"/>
</dbReference>
<dbReference type="PDB" id="2D96">
    <property type="method" value="NMR"/>
    <property type="chains" value="A=766-859"/>
</dbReference>
<dbReference type="PDB" id="3DO7">
    <property type="method" value="X-ray"/>
    <property type="resolution" value="3.05 A"/>
    <property type="chains" value="B=37-329"/>
</dbReference>
<dbReference type="PDB" id="4OT9">
    <property type="method" value="X-ray"/>
    <property type="resolution" value="3.35 A"/>
    <property type="chains" value="A=407-765"/>
</dbReference>
<dbReference type="PDB" id="5ZMC">
    <property type="method" value="X-ray"/>
    <property type="resolution" value="2.99 A"/>
    <property type="chains" value="A=35-329"/>
</dbReference>
<dbReference type="PDB" id="7CLI">
    <property type="method" value="X-ray"/>
    <property type="resolution" value="3.00 A"/>
    <property type="chains" value="A/B=1-398"/>
</dbReference>
<dbReference type="PDB" id="7VUP">
    <property type="method" value="X-ray"/>
    <property type="resolution" value="3.40 A"/>
    <property type="chains" value="A/B=1-398"/>
</dbReference>
<dbReference type="PDB" id="7VUQ">
    <property type="method" value="X-ray"/>
    <property type="resolution" value="3.10 A"/>
    <property type="chains" value="A/B=1-398"/>
</dbReference>
<dbReference type="PDB" id="7W7L">
    <property type="method" value="X-ray"/>
    <property type="resolution" value="3.00 A"/>
    <property type="chains" value="A/B=1-327"/>
</dbReference>
<dbReference type="PDB" id="8G8Q">
    <property type="method" value="X-ray"/>
    <property type="resolution" value="2.60 A"/>
    <property type="chains" value="B=329-348"/>
</dbReference>
<dbReference type="PDB" id="8G8S">
    <property type="method" value="X-ray"/>
    <property type="resolution" value="2.10 A"/>
    <property type="chains" value="B=309-343"/>
</dbReference>
<dbReference type="PDBsum" id="1A3Q"/>
<dbReference type="PDBsum" id="2D96"/>
<dbReference type="PDBsum" id="3DO7"/>
<dbReference type="PDBsum" id="4OT9"/>
<dbReference type="PDBsum" id="5ZMC"/>
<dbReference type="PDBsum" id="7CLI"/>
<dbReference type="PDBsum" id="7VUP"/>
<dbReference type="PDBsum" id="7VUQ"/>
<dbReference type="PDBsum" id="7W7L"/>
<dbReference type="PDBsum" id="8G8Q"/>
<dbReference type="PDBsum" id="8G8S"/>
<dbReference type="SMR" id="Q00653"/>
<dbReference type="BioGRID" id="110858">
    <property type="interactions" value="148"/>
</dbReference>
<dbReference type="ComplexPortal" id="CPX-5829">
    <property type="entry name" value="NF-kappaB DNA-binding transcription factor complex, p52/p65"/>
</dbReference>
<dbReference type="ComplexPortal" id="CPX-5830">
    <property type="entry name" value="NF-kappaB DNA-binding transcription factor complex, p52/c-Rel"/>
</dbReference>
<dbReference type="ComplexPortal" id="CPX-5831">
    <property type="entry name" value="NF-kappaB DNA-binding transcription factor complex, p52/RelB"/>
</dbReference>
<dbReference type="ComplexPortal" id="CPX-5837">
    <property type="entry name" value="NF-kappaB transcription regulation complex, p50-p52"/>
</dbReference>
<dbReference type="ComplexPortal" id="CPX-5839">
    <property type="entry name" value="NF-kappaB transcription regulation complex, p52/p52"/>
</dbReference>
<dbReference type="CORUM" id="Q00653"/>
<dbReference type="DIP" id="DIP-24239N"/>
<dbReference type="DIP" id="DIP-27535N"/>
<dbReference type="FunCoup" id="Q00653">
    <property type="interactions" value="1993"/>
</dbReference>
<dbReference type="IntAct" id="Q00653">
    <property type="interactions" value="62"/>
</dbReference>
<dbReference type="MINT" id="Q00653"/>
<dbReference type="STRING" id="9606.ENSP00000358983"/>
<dbReference type="ChEMBL" id="CHEMBL3003"/>
<dbReference type="DrugBank" id="DB01822">
    <property type="generic name" value="(4R,5R)-1,2-dithiane-4,5-diol"/>
</dbReference>
<dbReference type="DrugBank" id="DB05767">
    <property type="generic name" value="Andrographolide"/>
</dbReference>
<dbReference type="DrugBank" id="DB05487">
    <property type="generic name" value="Custirsen"/>
</dbReference>
<dbReference type="DrugBank" id="DB00843">
    <property type="generic name" value="Donepezil"/>
</dbReference>
<dbReference type="DrugBank" id="DB15010">
    <property type="generic name" value="Edasalonexent"/>
</dbReference>
<dbReference type="DrugBank" id="DB13961">
    <property type="generic name" value="Fish oil"/>
</dbReference>
<dbReference type="DrugBank" id="DB13751">
    <property type="generic name" value="Glycyrrhizic acid"/>
</dbReference>
<dbReference type="DrugBank" id="DB17029">
    <property type="generic name" value="Go-6976"/>
</dbReference>
<dbReference type="DrugBank" id="DB05212">
    <property type="generic name" value="HE3286"/>
</dbReference>
<dbReference type="DrugBank" id="DB06685">
    <property type="generic name" value="Laquinimod"/>
</dbReference>
<dbReference type="DrugBank" id="DB05559">
    <property type="generic name" value="NF-kappaB Decoy"/>
</dbReference>
<dbReference type="DrugBank" id="DB05464">
    <property type="generic name" value="NOX-700"/>
</dbReference>
<dbReference type="DrugBank" id="DB12843">
    <property type="generic name" value="Oleandrin"/>
</dbReference>
<dbReference type="DrugBank" id="DB05451">
    <property type="generic name" value="P54"/>
</dbReference>
<dbReference type="DrugBank" id="DB13063">
    <property type="generic name" value="Parthenolide"/>
</dbReference>
<dbReference type="DrugBank" id="DB01411">
    <property type="generic name" value="Pranlukast"/>
</dbReference>
<dbReference type="DrugBank" id="DB12058">
    <property type="generic name" value="Recoflavone"/>
</dbReference>
<dbReference type="DrugBank" id="DB15495">
    <property type="generic name" value="Rocaglamide"/>
</dbReference>
<dbReference type="DrugBank" id="DB14059">
    <property type="generic name" value="SC-236"/>
</dbReference>
<dbReference type="DrugBank" id="DB05471">
    <property type="generic name" value="SGN-30"/>
</dbReference>
<dbReference type="DrugBank" id="DB00795">
    <property type="generic name" value="Sulfasalazine"/>
</dbReference>
<dbReference type="DrugBank" id="DB18804">
    <property type="generic name" value="Tepilamide fumarate"/>
</dbReference>
<dbReference type="DrugBank" id="DB12816">
    <property type="generic name" value="Terpinen-4-ol"/>
</dbReference>
<dbReference type="DrugBank" id="DB12025">
    <property type="generic name" value="Triptolide"/>
</dbReference>
<dbReference type="DrugBank" id="DB06439">
    <property type="generic name" value="Tyloxapol"/>
</dbReference>
<dbReference type="DrugBank" id="DB06235">
    <property type="generic name" value="Vadimezan"/>
</dbReference>
<dbReference type="DrugCentral" id="Q00653"/>
<dbReference type="CarbonylDB" id="Q00653"/>
<dbReference type="GlyCosmos" id="Q00653">
    <property type="glycosylation" value="2 sites, 1 glycan"/>
</dbReference>
<dbReference type="GlyGen" id="Q00653">
    <property type="glycosylation" value="3 sites, 1 O-linked glycan (3 sites)"/>
</dbReference>
<dbReference type="iPTMnet" id="Q00653"/>
<dbReference type="PhosphoSitePlus" id="Q00653"/>
<dbReference type="SwissPalm" id="Q00653"/>
<dbReference type="BioMuta" id="NFKB2"/>
<dbReference type="DMDM" id="116242678"/>
<dbReference type="CPTAC" id="CPTAC-5970"/>
<dbReference type="CPTAC" id="CPTAC-721"/>
<dbReference type="jPOST" id="Q00653"/>
<dbReference type="MassIVE" id="Q00653"/>
<dbReference type="PaxDb" id="9606-ENSP00000358983"/>
<dbReference type="PeptideAtlas" id="Q00653"/>
<dbReference type="ProteomicsDB" id="57866">
    <molecule id="Q00653-1"/>
</dbReference>
<dbReference type="ProteomicsDB" id="57867">
    <molecule id="Q00653-3"/>
</dbReference>
<dbReference type="ProteomicsDB" id="57868">
    <molecule id="Q00653-4"/>
</dbReference>
<dbReference type="Pumba" id="Q00653"/>
<dbReference type="ABCD" id="Q00653">
    <property type="antibodies" value="1 sequenced antibody"/>
</dbReference>
<dbReference type="Antibodypedia" id="1322">
    <property type="antibodies" value="1021 antibodies from 48 providers"/>
</dbReference>
<dbReference type="CPTC" id="Q00653">
    <property type="antibodies" value="1 antibody"/>
</dbReference>
<dbReference type="DNASU" id="4791"/>
<dbReference type="Ensembl" id="ENST00000189444.11">
    <molecule id="Q00653-4"/>
    <property type="protein sequence ID" value="ENSP00000189444.6"/>
    <property type="gene ID" value="ENSG00000077150.21"/>
</dbReference>
<dbReference type="Ensembl" id="ENST00000369966.8">
    <molecule id="Q00653-1"/>
    <property type="protein sequence ID" value="ENSP00000358983.3"/>
    <property type="gene ID" value="ENSG00000077150.21"/>
</dbReference>
<dbReference type="Ensembl" id="ENST00000428099.6">
    <molecule id="Q00653-4"/>
    <property type="protein sequence ID" value="ENSP00000410256.1"/>
    <property type="gene ID" value="ENSG00000077150.21"/>
</dbReference>
<dbReference type="Ensembl" id="ENST00000652277.1">
    <molecule id="Q00653-4"/>
    <property type="protein sequence ID" value="ENSP00000498308.1"/>
    <property type="gene ID" value="ENSG00000077150.21"/>
</dbReference>
<dbReference type="Ensembl" id="ENST00000661543.1">
    <molecule id="Q00653-1"/>
    <property type="protein sequence ID" value="ENSP00000499294.1"/>
    <property type="gene ID" value="ENSG00000077150.21"/>
</dbReference>
<dbReference type="GeneID" id="4791"/>
<dbReference type="KEGG" id="hsa:4791"/>
<dbReference type="MANE-Select" id="ENST00000661543.1">
    <property type="protein sequence ID" value="ENSP00000499294.1"/>
    <property type="RefSeq nucleotide sequence ID" value="NM_001322934.2"/>
    <property type="RefSeq protein sequence ID" value="NP_001309863.1"/>
</dbReference>
<dbReference type="UCSC" id="uc001kva.4">
    <molecule id="Q00653-1"/>
    <property type="organism name" value="human"/>
</dbReference>
<dbReference type="AGR" id="HGNC:7795"/>
<dbReference type="CTD" id="4791"/>
<dbReference type="DisGeNET" id="4791"/>
<dbReference type="GeneCards" id="NFKB2"/>
<dbReference type="HGNC" id="HGNC:7795">
    <property type="gene designation" value="NFKB2"/>
</dbReference>
<dbReference type="HPA" id="ENSG00000077150">
    <property type="expression patterns" value="Low tissue specificity"/>
</dbReference>
<dbReference type="MalaCards" id="NFKB2"/>
<dbReference type="MIM" id="164012">
    <property type="type" value="gene"/>
</dbReference>
<dbReference type="MIM" id="615577">
    <property type="type" value="phenotype"/>
</dbReference>
<dbReference type="neXtProt" id="NX_Q00653"/>
<dbReference type="OpenTargets" id="ENSG00000077150"/>
<dbReference type="Orphanet" id="1572">
    <property type="disease" value="Common variable immunodeficiency"/>
</dbReference>
<dbReference type="Orphanet" id="293978">
    <property type="disease" value="Deficiency in anterior pituitary function-variable immunodeficiency syndrome"/>
</dbReference>
<dbReference type="PharmGKB" id="PA31600"/>
<dbReference type="VEuPathDB" id="HostDB:ENSG00000077150"/>
<dbReference type="eggNOG" id="KOG0504">
    <property type="taxonomic scope" value="Eukaryota"/>
</dbReference>
<dbReference type="GeneTree" id="ENSGT00940000160968"/>
<dbReference type="HOGENOM" id="CLU_004343_1_1_1"/>
<dbReference type="InParanoid" id="Q00653"/>
<dbReference type="OMA" id="QIAHIIY"/>
<dbReference type="OrthoDB" id="10254686at2759"/>
<dbReference type="PAN-GO" id="Q00653">
    <property type="GO annotations" value="3 GO annotations based on evolutionary models"/>
</dbReference>
<dbReference type="PhylomeDB" id="Q00653"/>
<dbReference type="TreeFam" id="TF325632"/>
<dbReference type="PathwayCommons" id="Q00653"/>
<dbReference type="Reactome" id="R-HSA-1810476">
    <property type="pathway name" value="RIP-mediated NFkB activation via ZBP1"/>
</dbReference>
<dbReference type="Reactome" id="R-HSA-3134963">
    <property type="pathway name" value="DEx/H-box helicases activate type I IFN and inflammatory cytokines production"/>
</dbReference>
<dbReference type="Reactome" id="R-HSA-3214841">
    <property type="pathway name" value="PKMTs methylate histone lysines"/>
</dbReference>
<dbReference type="Reactome" id="R-HSA-445989">
    <property type="pathway name" value="TAK1-dependent IKK and NF-kappa-B activation"/>
</dbReference>
<dbReference type="Reactome" id="R-HSA-448706">
    <property type="pathway name" value="Interleukin-1 processing"/>
</dbReference>
<dbReference type="Reactome" id="R-HSA-4755510">
    <property type="pathway name" value="SUMOylation of immune response proteins"/>
</dbReference>
<dbReference type="Reactome" id="R-HSA-5603029">
    <property type="pathway name" value="IkBA variant leads to EDA-ID"/>
</dbReference>
<dbReference type="Reactome" id="R-HSA-5607761">
    <property type="pathway name" value="Dectin-1 mediated noncanonical NF-kB signaling"/>
</dbReference>
<dbReference type="Reactome" id="R-HSA-5676590">
    <property type="pathway name" value="NIK--&gt;noncanonical NF-kB signaling"/>
</dbReference>
<dbReference type="Reactome" id="R-HSA-844456">
    <property type="pathway name" value="The NLRP3 inflammasome"/>
</dbReference>
<dbReference type="Reactome" id="R-HSA-933542">
    <property type="pathway name" value="TRAF6 mediated NF-kB activation"/>
</dbReference>
<dbReference type="Reactome" id="R-HSA-9660826">
    <property type="pathway name" value="Purinergic signaling in leishmaniasis infection"/>
</dbReference>
<dbReference type="SignaLink" id="Q00653"/>
<dbReference type="SIGNOR" id="Q00653"/>
<dbReference type="BioGRID-ORCS" id="4791">
    <property type="hits" value="48 hits in 1189 CRISPR screens"/>
</dbReference>
<dbReference type="ChiTaRS" id="NFKB2">
    <property type="organism name" value="human"/>
</dbReference>
<dbReference type="EvolutionaryTrace" id="Q00653"/>
<dbReference type="GeneWiki" id="NFKB2"/>
<dbReference type="GenomeRNAi" id="4791"/>
<dbReference type="Pharos" id="Q00653">
    <property type="development level" value="Tchem"/>
</dbReference>
<dbReference type="PRO" id="PR:Q00653"/>
<dbReference type="Proteomes" id="UP000005640">
    <property type="component" value="Chromosome 10"/>
</dbReference>
<dbReference type="RNAct" id="Q00653">
    <property type="molecule type" value="protein"/>
</dbReference>
<dbReference type="Bgee" id="ENSG00000077150">
    <property type="expression patterns" value="Expressed in granulocyte and 143 other cell types or tissues"/>
</dbReference>
<dbReference type="ExpressionAtlas" id="Q00653">
    <property type="expression patterns" value="baseline and differential"/>
</dbReference>
<dbReference type="GO" id="GO:0033257">
    <property type="term" value="C:Bcl3/NF-kappaB2 complex"/>
    <property type="evidence" value="ECO:0000314"/>
    <property type="project" value="UniProtKB"/>
</dbReference>
<dbReference type="GO" id="GO:0000785">
    <property type="term" value="C:chromatin"/>
    <property type="evidence" value="ECO:0000247"/>
    <property type="project" value="NTNU_SB"/>
</dbReference>
<dbReference type="GO" id="GO:0005737">
    <property type="term" value="C:cytoplasm"/>
    <property type="evidence" value="ECO:0000314"/>
    <property type="project" value="UniProtKB"/>
</dbReference>
<dbReference type="GO" id="GO:0005829">
    <property type="term" value="C:cytosol"/>
    <property type="evidence" value="ECO:0000314"/>
    <property type="project" value="HPA"/>
</dbReference>
<dbReference type="GO" id="GO:0005654">
    <property type="term" value="C:nucleoplasm"/>
    <property type="evidence" value="ECO:0000314"/>
    <property type="project" value="HPA"/>
</dbReference>
<dbReference type="GO" id="GO:0005634">
    <property type="term" value="C:nucleus"/>
    <property type="evidence" value="ECO:0000314"/>
    <property type="project" value="UniProtKB"/>
</dbReference>
<dbReference type="GO" id="GO:0001228">
    <property type="term" value="F:DNA-binding transcription activator activity, RNA polymerase II-specific"/>
    <property type="evidence" value="ECO:0000314"/>
    <property type="project" value="NTNU_SB"/>
</dbReference>
<dbReference type="GO" id="GO:0003700">
    <property type="term" value="F:DNA-binding transcription factor activity"/>
    <property type="evidence" value="ECO:0000304"/>
    <property type="project" value="ProtInc"/>
</dbReference>
<dbReference type="GO" id="GO:0000981">
    <property type="term" value="F:DNA-binding transcription factor activity, RNA polymerase II-specific"/>
    <property type="evidence" value="ECO:0000247"/>
    <property type="project" value="NTNU_SB"/>
</dbReference>
<dbReference type="GO" id="GO:0000978">
    <property type="term" value="F:RNA polymerase II cis-regulatory region sequence-specific DNA binding"/>
    <property type="evidence" value="ECO:0000314"/>
    <property type="project" value="NTNU_SB"/>
</dbReference>
<dbReference type="GO" id="GO:1990837">
    <property type="term" value="F:sequence-specific double-stranded DNA binding"/>
    <property type="evidence" value="ECO:0000314"/>
    <property type="project" value="ARUK-UCL"/>
</dbReference>
<dbReference type="GO" id="GO:0007249">
    <property type="term" value="P:canonical NF-kappaB signal transduction"/>
    <property type="evidence" value="ECO:0000314"/>
    <property type="project" value="UniProt"/>
</dbReference>
<dbReference type="GO" id="GO:0030198">
    <property type="term" value="P:extracellular matrix organization"/>
    <property type="evidence" value="ECO:0007669"/>
    <property type="project" value="Ensembl"/>
</dbReference>
<dbReference type="GO" id="GO:0002268">
    <property type="term" value="P:follicular dendritic cell differentiation"/>
    <property type="evidence" value="ECO:0007669"/>
    <property type="project" value="Ensembl"/>
</dbReference>
<dbReference type="GO" id="GO:0002467">
    <property type="term" value="P:germinal center formation"/>
    <property type="evidence" value="ECO:0007669"/>
    <property type="project" value="Ensembl"/>
</dbReference>
<dbReference type="GO" id="GO:0038061">
    <property type="term" value="P:non-canonical NF-kappaB signal transduction"/>
    <property type="evidence" value="ECO:0007669"/>
    <property type="project" value="Ensembl"/>
</dbReference>
<dbReference type="GO" id="GO:0045944">
    <property type="term" value="P:positive regulation of transcription by RNA polymerase II"/>
    <property type="evidence" value="ECO:0000314"/>
    <property type="project" value="NTNU_SB"/>
</dbReference>
<dbReference type="GO" id="GO:0006355">
    <property type="term" value="P:regulation of DNA-templated transcription"/>
    <property type="evidence" value="ECO:0000314"/>
    <property type="project" value="UniProtKB"/>
</dbReference>
<dbReference type="GO" id="GO:0034097">
    <property type="term" value="P:response to cytokine"/>
    <property type="evidence" value="ECO:0007669"/>
    <property type="project" value="Ensembl"/>
</dbReference>
<dbReference type="GO" id="GO:0032496">
    <property type="term" value="P:response to lipopolysaccharide"/>
    <property type="evidence" value="ECO:0007669"/>
    <property type="project" value="Ensembl"/>
</dbReference>
<dbReference type="GO" id="GO:0048511">
    <property type="term" value="P:rhythmic process"/>
    <property type="evidence" value="ECO:0007669"/>
    <property type="project" value="UniProtKB-KW"/>
</dbReference>
<dbReference type="GO" id="GO:0048536">
    <property type="term" value="P:spleen development"/>
    <property type="evidence" value="ECO:0007669"/>
    <property type="project" value="Ensembl"/>
</dbReference>
<dbReference type="CDD" id="cd08798">
    <property type="entry name" value="Death_NFkB2_p100"/>
    <property type="match status" value="1"/>
</dbReference>
<dbReference type="CDD" id="cd01177">
    <property type="entry name" value="IPT_NFkappaB"/>
    <property type="match status" value="1"/>
</dbReference>
<dbReference type="CDD" id="cd07934">
    <property type="entry name" value="RHD-n_NFkB2"/>
    <property type="match status" value="1"/>
</dbReference>
<dbReference type="DisProt" id="DP03039"/>
<dbReference type="FunFam" id="1.25.40.20:FF:000127">
    <property type="entry name" value="Nuclear factor NF-kappa-B p100 subunit isoform b"/>
    <property type="match status" value="1"/>
</dbReference>
<dbReference type="FunFam" id="1.10.533.10:FF:000061">
    <property type="entry name" value="nuclear factor NF-kappa-B p100 subunit isoform X1"/>
    <property type="match status" value="1"/>
</dbReference>
<dbReference type="FunFam" id="2.60.40.10:FF:000046">
    <property type="entry name" value="Nuclear factor NF-kappa-B p105 subunit"/>
    <property type="match status" value="1"/>
</dbReference>
<dbReference type="FunFam" id="2.60.40.340:FF:000004">
    <property type="entry name" value="Nuclear factor NF-kappa-B p105 subunit isoform 1"/>
    <property type="match status" value="1"/>
</dbReference>
<dbReference type="Gene3D" id="1.25.40.20">
    <property type="entry name" value="Ankyrin repeat-containing domain"/>
    <property type="match status" value="1"/>
</dbReference>
<dbReference type="Gene3D" id="1.10.533.10">
    <property type="entry name" value="Death Domain, Fas"/>
    <property type="match status" value="1"/>
</dbReference>
<dbReference type="Gene3D" id="2.60.40.10">
    <property type="entry name" value="Immunoglobulins"/>
    <property type="match status" value="1"/>
</dbReference>
<dbReference type="Gene3D" id="2.60.40.340">
    <property type="entry name" value="Rel homology domain (RHD), DNA-binding domain"/>
    <property type="match status" value="1"/>
</dbReference>
<dbReference type="InterPro" id="IPR002110">
    <property type="entry name" value="Ankyrin_rpt"/>
</dbReference>
<dbReference type="InterPro" id="IPR036770">
    <property type="entry name" value="Ankyrin_rpt-contain_sf"/>
</dbReference>
<dbReference type="InterPro" id="IPR011029">
    <property type="entry name" value="DEATH-like_dom_sf"/>
</dbReference>
<dbReference type="InterPro" id="IPR000488">
    <property type="entry name" value="Death_dom"/>
</dbReference>
<dbReference type="InterPro" id="IPR013783">
    <property type="entry name" value="Ig-like_fold"/>
</dbReference>
<dbReference type="InterPro" id="IPR014756">
    <property type="entry name" value="Ig_E-set"/>
</dbReference>
<dbReference type="InterPro" id="IPR002909">
    <property type="entry name" value="IPT_dom"/>
</dbReference>
<dbReference type="InterPro" id="IPR033926">
    <property type="entry name" value="IPT_NFkappaB"/>
</dbReference>
<dbReference type="InterPro" id="IPR000451">
    <property type="entry name" value="NFkB/Dor"/>
</dbReference>
<dbReference type="InterPro" id="IPR030497">
    <property type="entry name" value="NFkB_p100_RHD_N"/>
</dbReference>
<dbReference type="InterPro" id="IPR008967">
    <property type="entry name" value="p53-like_TF_DNA-bd_sf"/>
</dbReference>
<dbReference type="InterPro" id="IPR030492">
    <property type="entry name" value="RHD_CS"/>
</dbReference>
<dbReference type="InterPro" id="IPR032397">
    <property type="entry name" value="RHD_dimer"/>
</dbReference>
<dbReference type="InterPro" id="IPR011539">
    <property type="entry name" value="RHD_DNA_bind_dom"/>
</dbReference>
<dbReference type="InterPro" id="IPR037059">
    <property type="entry name" value="RHD_DNA_bind_dom_sf"/>
</dbReference>
<dbReference type="PANTHER" id="PTHR24169:SF21">
    <property type="entry name" value="NUCLEAR FACTOR NF-KAPPA-B P100 SUBUNIT"/>
    <property type="match status" value="1"/>
</dbReference>
<dbReference type="PANTHER" id="PTHR24169">
    <property type="entry name" value="NUCLEAR FACTOR NF-KAPPA-B PROTEIN"/>
    <property type="match status" value="1"/>
</dbReference>
<dbReference type="Pfam" id="PF12796">
    <property type="entry name" value="Ank_2"/>
    <property type="match status" value="2"/>
</dbReference>
<dbReference type="Pfam" id="PF00531">
    <property type="entry name" value="Death"/>
    <property type="match status" value="1"/>
</dbReference>
<dbReference type="Pfam" id="PF16179">
    <property type="entry name" value="RHD_dimer"/>
    <property type="match status" value="1"/>
</dbReference>
<dbReference type="Pfam" id="PF00554">
    <property type="entry name" value="RHD_DNA_bind"/>
    <property type="match status" value="1"/>
</dbReference>
<dbReference type="PRINTS" id="PR01415">
    <property type="entry name" value="ANKYRIN"/>
</dbReference>
<dbReference type="PRINTS" id="PR00057">
    <property type="entry name" value="NFKBTNSCPFCT"/>
</dbReference>
<dbReference type="SMART" id="SM00248">
    <property type="entry name" value="ANK"/>
    <property type="match status" value="6"/>
</dbReference>
<dbReference type="SMART" id="SM00005">
    <property type="entry name" value="DEATH"/>
    <property type="match status" value="1"/>
</dbReference>
<dbReference type="SMART" id="SM00429">
    <property type="entry name" value="IPT"/>
    <property type="match status" value="1"/>
</dbReference>
<dbReference type="SUPFAM" id="SSF48403">
    <property type="entry name" value="Ankyrin repeat"/>
    <property type="match status" value="1"/>
</dbReference>
<dbReference type="SUPFAM" id="SSF47986">
    <property type="entry name" value="DEATH domain"/>
    <property type="match status" value="1"/>
</dbReference>
<dbReference type="SUPFAM" id="SSF81296">
    <property type="entry name" value="E set domains"/>
    <property type="match status" value="1"/>
</dbReference>
<dbReference type="SUPFAM" id="SSF49417">
    <property type="entry name" value="p53-like transcription factors"/>
    <property type="match status" value="1"/>
</dbReference>
<dbReference type="PROSITE" id="PS50297">
    <property type="entry name" value="ANK_REP_REGION"/>
    <property type="match status" value="1"/>
</dbReference>
<dbReference type="PROSITE" id="PS50088">
    <property type="entry name" value="ANK_REPEAT"/>
    <property type="match status" value="5"/>
</dbReference>
<dbReference type="PROSITE" id="PS01204">
    <property type="entry name" value="REL_1"/>
    <property type="match status" value="1"/>
</dbReference>
<dbReference type="PROSITE" id="PS50254">
    <property type="entry name" value="REL_2"/>
    <property type="match status" value="1"/>
</dbReference>
<protein>
    <recommendedName>
        <fullName>Nuclear factor NF-kappa-B p100 subunit</fullName>
    </recommendedName>
    <alternativeName>
        <fullName>DNA-binding factor KBF2</fullName>
    </alternativeName>
    <alternativeName>
        <fullName>H2TF1</fullName>
    </alternativeName>
    <alternativeName>
        <fullName>Lymphocyte translocation chromosome 10 protein</fullName>
    </alternativeName>
    <alternativeName>
        <fullName>Nuclear factor of kappa light polypeptide gene enhancer in B-cells 2</fullName>
    </alternativeName>
    <alternativeName>
        <fullName>Oncogene Lyt-10</fullName>
        <shortName>Lyt10</shortName>
    </alternativeName>
    <component>
        <recommendedName>
            <fullName>Nuclear factor NF-kappa-B p52 subunit</fullName>
        </recommendedName>
    </component>
</protein>
<sequence length="900" mass="96749">MESCYNPGLDGIIEYDDFKLNSSIVEPKEPAPETADGPYLVIVEQPKQRGFRFRYGCEGPSHGGLPGASSEKGRKTYPTVKICNYEGPAKIEVDLVTHSDPPRAHAHSLVGKQCSELGICAVSVGPKDMTAQFNNLGVLHVTKKNMMGTMIQKLQRQRLRSRPQGLTEAEQRELEQEAKELKKVMDLSIVRLRFSAFLRASDGSFSLPLKPVISQPIHDSKSPGASNLKISRMDKTAGSVRGGDEVYLLCDKVQKDDIEVRFYEDDENGWQAFGDFSPTDVHKQYAIVFRTPPYHKMKIERPVTVFLQLKRKRGGDVSDSKQFTYYPLVEDKEEVQRKRRKALPTFSQPFGGGSHMGGGSGGAAGGYGGAGGGGSLGFFPSSLAYSPYQSGAGPMGCYPGGGGGAQMAATVPSRDSGEEAAEPSAPSRTPQCEPQAPEMLQRAREYNARLFGLAQRSARALLDYGVTADARALLAGQRHLLTAQDENGDTPLHLAIIHGQTSVIEQIVYVIHHAQDLGVVNLTNHLHQTPLHLAVITGQTSVVSFLLRVGADPALLDRHGDSAMHLALRAGAGAPELLRALLQSGAPAVPQLLHMPDFEGLYPVHLAVRARSPECLDLLVDSGAEVEATERQGGRTALHLATEMEELGLVTHLVTKLRANVNARTFAGNTPLHLAAGLGYPTLTRLLLKAGADIHAENEEPLCPLPSPPTSDSDSDSEGPEKDTRSSFRGHTPLDLTCSTKVKTLLLNAAQNTMEPPLTPPSPAGPGLSLGDTALQNLEQLLDGPEAQGSWAELAERLGLRSLVDTYRQTTSPSGSLLRSYELAGGDLAGLLEALSDMGLEEGVRLLRGPETRDKLPSTAEVKEDSAYGSQSVEQEAEKLGPPPEPPGGLCHGHPQPQVH</sequence>
<reference key="1">
    <citation type="journal article" date="1991" name="Nature">
        <title>Cloning of an NF-kappa B subunit which stimulates HIV transcription in synergy with p65.</title>
        <authorList>
            <person name="Schmid R.M."/>
            <person name="Perkins N.D."/>
            <person name="Duckett C.S."/>
            <person name="Andrews P.C."/>
            <person name="Nabel G.J."/>
        </authorList>
    </citation>
    <scope>NUCLEOTIDE SEQUENCE [MRNA] (ISOFORMS 3 AND 4)</scope>
    <source>
        <tissue>Leukemia</tissue>
    </source>
</reference>
<reference key="2">
    <citation type="journal article" date="1992" name="Mol. Cell. Biol.">
        <title>A novel mitogen-inducible gene product related to p50/p105-NF-kappa B participates in transactivation through a kappa B site.</title>
        <authorList>
            <person name="Bours V."/>
            <person name="Burd P.R."/>
            <person name="Brown K."/>
            <person name="Villalobos J."/>
            <person name="Park S."/>
            <person name="Ryseck R.P."/>
            <person name="Bravo R."/>
            <person name="Kelly K."/>
            <person name="Siebenlist U."/>
        </authorList>
    </citation>
    <scope>NUCLEOTIDE SEQUENCE [MRNA] (ISOFORM 1)</scope>
</reference>
<reference key="3">
    <citation type="journal article" date="1994" name="Oncogene">
        <title>Rearrangement and altered expression of the NFKB-2 gene in human cutaneous T-lymphoma cells.</title>
        <authorList>
            <person name="Thakur S."/>
            <person name="Lin H.C."/>
            <person name="Tseng W.T."/>
            <person name="Kumar S."/>
            <person name="Bravo R."/>
            <person name="Foss F."/>
            <person name="Gelinas C."/>
            <person name="Rabson A.B."/>
        </authorList>
    </citation>
    <scope>NUCLEOTIDE SEQUENCE [MRNA]</scope>
    <scope>CHROMOSOMAL TRANSLOCATION</scope>
    <scope>P80HT GENERATION</scope>
</reference>
<reference key="4">
    <citation type="submission" date="2006-02" db="EMBL/GenBank/DDBJ databases">
        <authorList>
            <person name="Rabson A.B."/>
        </authorList>
    </citation>
    <scope>SEQUENCE REVISION</scope>
</reference>
<reference key="5">
    <citation type="submission" date="2003-08" db="EMBL/GenBank/DDBJ databases">
        <title>Cloning of human full-length CDSs in BD Creator(TM) system donor vector.</title>
        <authorList>
            <person name="Kalnine N."/>
            <person name="Chen X."/>
            <person name="Rolfs A."/>
            <person name="Halleck A."/>
            <person name="Hines L."/>
            <person name="Eisenstein S."/>
            <person name="Koundinya M."/>
            <person name="Raphael J."/>
            <person name="Moreira D."/>
            <person name="Kelley T."/>
            <person name="LaBaer J."/>
            <person name="Lin Y."/>
            <person name="Phelan M."/>
            <person name="Farmer A."/>
        </authorList>
    </citation>
    <scope>NUCLEOTIDE SEQUENCE [LARGE SCALE MRNA] (ISOFORM 4)</scope>
</reference>
<reference key="6">
    <citation type="journal article" date="2004" name="Nat. Genet.">
        <title>Complete sequencing and characterization of 21,243 full-length human cDNAs.</title>
        <authorList>
            <person name="Ota T."/>
            <person name="Suzuki Y."/>
            <person name="Nishikawa T."/>
            <person name="Otsuki T."/>
            <person name="Sugiyama T."/>
            <person name="Irie R."/>
            <person name="Wakamatsu A."/>
            <person name="Hayashi K."/>
            <person name="Sato H."/>
            <person name="Nagai K."/>
            <person name="Kimura K."/>
            <person name="Makita H."/>
            <person name="Sekine M."/>
            <person name="Obayashi M."/>
            <person name="Nishi T."/>
            <person name="Shibahara T."/>
            <person name="Tanaka T."/>
            <person name="Ishii S."/>
            <person name="Yamamoto J."/>
            <person name="Saito K."/>
            <person name="Kawai Y."/>
            <person name="Isono Y."/>
            <person name="Nakamura Y."/>
            <person name="Nagahari K."/>
            <person name="Murakami K."/>
            <person name="Yasuda T."/>
            <person name="Iwayanagi T."/>
            <person name="Wagatsuma M."/>
            <person name="Shiratori A."/>
            <person name="Sudo H."/>
            <person name="Hosoiri T."/>
            <person name="Kaku Y."/>
            <person name="Kodaira H."/>
            <person name="Kondo H."/>
            <person name="Sugawara M."/>
            <person name="Takahashi M."/>
            <person name="Kanda K."/>
            <person name="Yokoi T."/>
            <person name="Furuya T."/>
            <person name="Kikkawa E."/>
            <person name="Omura Y."/>
            <person name="Abe K."/>
            <person name="Kamihara K."/>
            <person name="Katsuta N."/>
            <person name="Sato K."/>
            <person name="Tanikawa M."/>
            <person name="Yamazaki M."/>
            <person name="Ninomiya K."/>
            <person name="Ishibashi T."/>
            <person name="Yamashita H."/>
            <person name="Murakawa K."/>
            <person name="Fujimori K."/>
            <person name="Tanai H."/>
            <person name="Kimata M."/>
            <person name="Watanabe M."/>
            <person name="Hiraoka S."/>
            <person name="Chiba Y."/>
            <person name="Ishida S."/>
            <person name="Ono Y."/>
            <person name="Takiguchi S."/>
            <person name="Watanabe S."/>
            <person name="Yosida M."/>
            <person name="Hotuta T."/>
            <person name="Kusano J."/>
            <person name="Kanehori K."/>
            <person name="Takahashi-Fujii A."/>
            <person name="Hara H."/>
            <person name="Tanase T.-O."/>
            <person name="Nomura Y."/>
            <person name="Togiya S."/>
            <person name="Komai F."/>
            <person name="Hara R."/>
            <person name="Takeuchi K."/>
            <person name="Arita M."/>
            <person name="Imose N."/>
            <person name="Musashino K."/>
            <person name="Yuuki H."/>
            <person name="Oshima A."/>
            <person name="Sasaki N."/>
            <person name="Aotsuka S."/>
            <person name="Yoshikawa Y."/>
            <person name="Matsunawa H."/>
            <person name="Ichihara T."/>
            <person name="Shiohata N."/>
            <person name="Sano S."/>
            <person name="Moriya S."/>
            <person name="Momiyama H."/>
            <person name="Satoh N."/>
            <person name="Takami S."/>
            <person name="Terashima Y."/>
            <person name="Suzuki O."/>
            <person name="Nakagawa S."/>
            <person name="Senoh A."/>
            <person name="Mizoguchi H."/>
            <person name="Goto Y."/>
            <person name="Shimizu F."/>
            <person name="Wakebe H."/>
            <person name="Hishigaki H."/>
            <person name="Watanabe T."/>
            <person name="Sugiyama A."/>
            <person name="Takemoto M."/>
            <person name="Kawakami B."/>
            <person name="Yamazaki M."/>
            <person name="Watanabe K."/>
            <person name="Kumagai A."/>
            <person name="Itakura S."/>
            <person name="Fukuzumi Y."/>
            <person name="Fujimori Y."/>
            <person name="Komiyama M."/>
            <person name="Tashiro H."/>
            <person name="Tanigami A."/>
            <person name="Fujiwara T."/>
            <person name="Ono T."/>
            <person name="Yamada K."/>
            <person name="Fujii Y."/>
            <person name="Ozaki K."/>
            <person name="Hirao M."/>
            <person name="Ohmori Y."/>
            <person name="Kawabata A."/>
            <person name="Hikiji T."/>
            <person name="Kobatake N."/>
            <person name="Inagaki H."/>
            <person name="Ikema Y."/>
            <person name="Okamoto S."/>
            <person name="Okitani R."/>
            <person name="Kawakami T."/>
            <person name="Noguchi S."/>
            <person name="Itoh T."/>
            <person name="Shigeta K."/>
            <person name="Senba T."/>
            <person name="Matsumura K."/>
            <person name="Nakajima Y."/>
            <person name="Mizuno T."/>
            <person name="Morinaga M."/>
            <person name="Sasaki M."/>
            <person name="Togashi T."/>
            <person name="Oyama M."/>
            <person name="Hata H."/>
            <person name="Watanabe M."/>
            <person name="Komatsu T."/>
            <person name="Mizushima-Sugano J."/>
            <person name="Satoh T."/>
            <person name="Shirai Y."/>
            <person name="Takahashi Y."/>
            <person name="Nakagawa K."/>
            <person name="Okumura K."/>
            <person name="Nagase T."/>
            <person name="Nomura N."/>
            <person name="Kikuchi H."/>
            <person name="Masuho Y."/>
            <person name="Yamashita R."/>
            <person name="Nakai K."/>
            <person name="Yada T."/>
            <person name="Nakamura Y."/>
            <person name="Ohara O."/>
            <person name="Isogai T."/>
            <person name="Sugano S."/>
        </authorList>
    </citation>
    <scope>NUCLEOTIDE SEQUENCE [LARGE SCALE MRNA] (ISOFORM 4)</scope>
    <source>
        <tissue>Thymus</tissue>
    </source>
</reference>
<reference key="7">
    <citation type="submission" date="2004-12" db="EMBL/GenBank/DDBJ databases">
        <authorList>
            <consortium name="NIEHS SNPs program"/>
        </authorList>
    </citation>
    <scope>NUCLEOTIDE SEQUENCE [GENOMIC DNA]</scope>
    <scope>VARIANTS LYS-14; ARG-351 AND ARG-452</scope>
</reference>
<reference key="8">
    <citation type="journal article" date="2004" name="Nature">
        <title>The DNA sequence and comparative analysis of human chromosome 10.</title>
        <authorList>
            <person name="Deloukas P."/>
            <person name="Earthrowl M.E."/>
            <person name="Grafham D.V."/>
            <person name="Rubenfield M."/>
            <person name="French L."/>
            <person name="Steward C.A."/>
            <person name="Sims S.K."/>
            <person name="Jones M.C."/>
            <person name="Searle S."/>
            <person name="Scott C."/>
            <person name="Howe K."/>
            <person name="Hunt S.E."/>
            <person name="Andrews T.D."/>
            <person name="Gilbert J.G.R."/>
            <person name="Swarbreck D."/>
            <person name="Ashurst J.L."/>
            <person name="Taylor A."/>
            <person name="Battles J."/>
            <person name="Bird C.P."/>
            <person name="Ainscough R."/>
            <person name="Almeida J.P."/>
            <person name="Ashwell R.I.S."/>
            <person name="Ambrose K.D."/>
            <person name="Babbage A.K."/>
            <person name="Bagguley C.L."/>
            <person name="Bailey J."/>
            <person name="Banerjee R."/>
            <person name="Bates K."/>
            <person name="Beasley H."/>
            <person name="Bray-Allen S."/>
            <person name="Brown A.J."/>
            <person name="Brown J.Y."/>
            <person name="Burford D.C."/>
            <person name="Burrill W."/>
            <person name="Burton J."/>
            <person name="Cahill P."/>
            <person name="Camire D."/>
            <person name="Carter N.P."/>
            <person name="Chapman J.C."/>
            <person name="Clark S.Y."/>
            <person name="Clarke G."/>
            <person name="Clee C.M."/>
            <person name="Clegg S."/>
            <person name="Corby N."/>
            <person name="Coulson A."/>
            <person name="Dhami P."/>
            <person name="Dutta I."/>
            <person name="Dunn M."/>
            <person name="Faulkner L."/>
            <person name="Frankish A."/>
            <person name="Frankland J.A."/>
            <person name="Garner P."/>
            <person name="Garnett J."/>
            <person name="Gribble S."/>
            <person name="Griffiths C."/>
            <person name="Grocock R."/>
            <person name="Gustafson E."/>
            <person name="Hammond S."/>
            <person name="Harley J.L."/>
            <person name="Hart E."/>
            <person name="Heath P.D."/>
            <person name="Ho T.P."/>
            <person name="Hopkins B."/>
            <person name="Horne J."/>
            <person name="Howden P.J."/>
            <person name="Huckle E."/>
            <person name="Hynds C."/>
            <person name="Johnson C."/>
            <person name="Johnson D."/>
            <person name="Kana A."/>
            <person name="Kay M."/>
            <person name="Kimberley A.M."/>
            <person name="Kershaw J.K."/>
            <person name="Kokkinaki M."/>
            <person name="Laird G.K."/>
            <person name="Lawlor S."/>
            <person name="Lee H.M."/>
            <person name="Leongamornlert D.A."/>
            <person name="Laird G."/>
            <person name="Lloyd C."/>
            <person name="Lloyd D.M."/>
            <person name="Loveland J."/>
            <person name="Lovell J."/>
            <person name="McLaren S."/>
            <person name="McLay K.E."/>
            <person name="McMurray A."/>
            <person name="Mashreghi-Mohammadi M."/>
            <person name="Matthews L."/>
            <person name="Milne S."/>
            <person name="Nickerson T."/>
            <person name="Nguyen M."/>
            <person name="Overton-Larty E."/>
            <person name="Palmer S.A."/>
            <person name="Pearce A.V."/>
            <person name="Peck A.I."/>
            <person name="Pelan S."/>
            <person name="Phillimore B."/>
            <person name="Porter K."/>
            <person name="Rice C.M."/>
            <person name="Rogosin A."/>
            <person name="Ross M.T."/>
            <person name="Sarafidou T."/>
            <person name="Sehra H.K."/>
            <person name="Shownkeen R."/>
            <person name="Skuce C.D."/>
            <person name="Smith M."/>
            <person name="Standring L."/>
            <person name="Sycamore N."/>
            <person name="Tester J."/>
            <person name="Thorpe A."/>
            <person name="Torcasso W."/>
            <person name="Tracey A."/>
            <person name="Tromans A."/>
            <person name="Tsolas J."/>
            <person name="Wall M."/>
            <person name="Walsh J."/>
            <person name="Wang H."/>
            <person name="Weinstock K."/>
            <person name="West A.P."/>
            <person name="Willey D.L."/>
            <person name="Whitehead S.L."/>
            <person name="Wilming L."/>
            <person name="Wray P.W."/>
            <person name="Young L."/>
            <person name="Chen Y."/>
            <person name="Lovering R.C."/>
            <person name="Moschonas N.K."/>
            <person name="Siebert R."/>
            <person name="Fechtel K."/>
            <person name="Bentley D."/>
            <person name="Durbin R.M."/>
            <person name="Hubbard T."/>
            <person name="Doucette-Stamm L."/>
            <person name="Beck S."/>
            <person name="Smith D.R."/>
            <person name="Rogers J."/>
        </authorList>
    </citation>
    <scope>NUCLEOTIDE SEQUENCE [LARGE SCALE GENOMIC DNA]</scope>
</reference>
<reference key="9">
    <citation type="submission" date="2005-09" db="EMBL/GenBank/DDBJ databases">
        <authorList>
            <person name="Mural R.J."/>
            <person name="Istrail S."/>
            <person name="Sutton G.G."/>
            <person name="Florea L."/>
            <person name="Halpern A.L."/>
            <person name="Mobarry C.M."/>
            <person name="Lippert R."/>
            <person name="Walenz B."/>
            <person name="Shatkay H."/>
            <person name="Dew I."/>
            <person name="Miller J.R."/>
            <person name="Flanigan M.J."/>
            <person name="Edwards N.J."/>
            <person name="Bolanos R."/>
            <person name="Fasulo D."/>
            <person name="Halldorsson B.V."/>
            <person name="Hannenhalli S."/>
            <person name="Turner R."/>
            <person name="Yooseph S."/>
            <person name="Lu F."/>
            <person name="Nusskern D.R."/>
            <person name="Shue B.C."/>
            <person name="Zheng X.H."/>
            <person name="Zhong F."/>
            <person name="Delcher A.L."/>
            <person name="Huson D.H."/>
            <person name="Kravitz S.A."/>
            <person name="Mouchard L."/>
            <person name="Reinert K."/>
            <person name="Remington K.A."/>
            <person name="Clark A.G."/>
            <person name="Waterman M.S."/>
            <person name="Eichler E.E."/>
            <person name="Adams M.D."/>
            <person name="Hunkapiller M.W."/>
            <person name="Myers E.W."/>
            <person name="Venter J.C."/>
        </authorList>
    </citation>
    <scope>NUCLEOTIDE SEQUENCE [LARGE SCALE GENOMIC DNA]</scope>
</reference>
<reference key="10">
    <citation type="journal article" date="2004" name="Genome Res.">
        <title>The status, quality, and expansion of the NIH full-length cDNA project: the Mammalian Gene Collection (MGC).</title>
        <authorList>
            <consortium name="The MGC Project Team"/>
        </authorList>
    </citation>
    <scope>NUCLEOTIDE SEQUENCE [LARGE SCALE MRNA] (ISOFORM 4)</scope>
    <source>
        <tissue>Lymph</tissue>
    </source>
</reference>
<reference key="11">
    <citation type="journal article" date="1994" name="Mol. Cell. Biol.">
        <title>Transcriptional regulation of NF-kappa B2: evidence for kappa B-mediated positive and negative autoregulation.</title>
        <authorList>
            <person name="Liptay S."/>
            <person name="Schmid R.M."/>
            <person name="Nabel E.G."/>
            <person name="Nabel G.J."/>
        </authorList>
    </citation>
    <scope>NUCLEOTIDE SEQUENCE [GENOMIC DNA] OF 1-220</scope>
</reference>
<reference key="12">
    <citation type="journal article" date="1993" name="J. Biol. Chem.">
        <title>Purification of the major histocompatibility complex class I transcription factor H2TF1. The full-length product of the nfkb2 gene.</title>
        <authorList>
            <person name="Potter D.A."/>
            <person name="Larson C.J."/>
            <person name="Eckes P."/>
            <person name="Schmid R.M."/>
            <person name="Nabel G.J."/>
            <person name="Verdine G.L."/>
            <person name="Sharp P.A."/>
        </authorList>
    </citation>
    <scope>PROTEIN SEQUENCE OF 459-470; 580-597 AND 636-647 (ISOFORM 1)</scope>
</reference>
<reference key="13">
    <citation type="journal article" date="1993" name="Cell">
        <title>The oncoprotein Bcl-3 directly transactivates through kappa B motifs via association with DNA-binding p50B homodimers.</title>
        <authorList>
            <person name="Bours V."/>
            <person name="Franzoso G."/>
            <person name="Azarenko V."/>
            <person name="Park S."/>
            <person name="Kanno T."/>
            <person name="Brown K."/>
            <person name="Siebenlist U."/>
        </authorList>
    </citation>
    <scope>IDENTIFICATION IN A COMPLEX WITH BCL3</scope>
</reference>
<reference key="14">
    <citation type="journal article" date="1994" name="EMBO J.">
        <title>Differential interactions of Rel-NF-kappa B complexes with I kappa B alpha determine pools of constitutive and inducible NF-kappa B activity.</title>
        <authorList>
            <person name="Dobrzanski P."/>
            <person name="Ryseck R.P."/>
            <person name="Bravo R."/>
        </authorList>
    </citation>
    <scope>FUNCTION</scope>
    <scope>IDENTIFICATION IN THE NF-KAPPA-B RELB-P52 COMPLEX</scope>
</reference>
<reference key="15">
    <citation type="journal article" date="1994" name="Oncogene">
        <title>Activation of multiple NF-kappa B/Rel DNA-binding complexes by tumor necrosis factor.</title>
        <authorList>
            <person name="Beg A.A."/>
            <person name="Baldwin A.S. Jr."/>
        </authorList>
    </citation>
    <scope>IDENTIFICATION IN THE NF-KAPPA-B P52-C-REL COMPLEX</scope>
    <scope>IDENTIFICATION IN THE NF-KAPPA-B P65-P52 COMPLEX</scope>
</reference>
<reference key="16">
    <citation type="journal article" date="1997" name="Mol. Cell. Biol.">
        <title>A new member of the IkappaB protein family, IkappaB epsilon, inhibits RelA (p65)-mediated NF-kappaB transcription.</title>
        <authorList>
            <person name="Li Z."/>
            <person name="Nabel G.J."/>
        </authorList>
    </citation>
    <scope>INTERACTION WITH NFKBIE</scope>
</reference>
<reference key="17">
    <citation type="journal article" date="1999" name="Oncogene">
        <title>The generation of nfkb2 p52: mechanism and efficiency.</title>
        <authorList>
            <person name="Heusch M."/>
            <person name="Lin L."/>
            <person name="Geleziunas R."/>
            <person name="Greene W.C."/>
        </authorList>
    </citation>
    <scope>COTRANSLATIONAL FOLDING/PROCESSING OF P100</scope>
    <scope>GENERATION OF P52/P100</scope>
</reference>
<reference key="18">
    <citation type="journal article" date="1996" name="Mol. Cell. Biol.">
        <title>Differential regulation of NF-kappaB2(p100) processing and control by amino-terminal sequences.</title>
        <authorList>
            <person name="Betts J.C."/>
            <person name="Nabel G.J."/>
        </authorList>
    </citation>
    <scope>PHOSPHORYLATION AT SER-713; SER-715 AND SER-717</scope>
    <scope>MUTAGENESIS</scope>
    <scope>DIMERIZATION</scope>
    <scope>PROTEOLYTIC PROCESSING OF P100</scope>
</reference>
<reference key="19">
    <citation type="journal article" date="2001" name="Mol. Cell">
        <title>NF-kappaB-inducing kinase regulates the processing of NF-kappaB2 p100.</title>
        <authorList>
            <person name="Xiao G."/>
            <person name="Harhaj E.W."/>
            <person name="Sun S.-C."/>
        </authorList>
    </citation>
    <scope>PHOSPHORYLATION AT SER-866 AND SER-870</scope>
    <scope>MUTAGENESIS OF SER-866 AND SER-870</scope>
    <scope>PROTEOLYTIC PROCESSING OF P100</scope>
</reference>
<reference key="20">
    <citation type="journal article" date="1991" name="Cell">
        <title>B cell lymphoma-associated chromosomal translocation involves candidate oncogene lyt-10, homologous to NF-kappa B p50.</title>
        <authorList>
            <person name="Neri A."/>
            <person name="Chang C.C."/>
            <person name="Lombardi L."/>
            <person name="Salina M."/>
            <person name="Corradini P."/>
            <person name="Maiolo A.T."/>
            <person name="Chaganti R.S."/>
            <person name="Dalla-Favera R."/>
        </authorList>
    </citation>
    <scope>CHROMOSOMAL TRANSLOCATION WITH IGHA1</scope>
</reference>
<reference key="21">
    <citation type="journal article" date="1994" name="Blood">
        <title>Heterogeneous chromosomal aberrations generate 3' truncations of the NFKB2/lyt-10 gene in lymphoid malignancies.</title>
        <authorList>
            <person name="Migliazza A."/>
            <person name="Lombardi L."/>
            <person name="Rocchi M."/>
            <person name="Trecca D."/>
            <person name="Chang C.-C."/>
            <person name="Antonacci R."/>
            <person name="Fracchiolla N.S."/>
            <person name="Ciana P."/>
            <person name="Maiolo A.T."/>
            <person name="Neri A."/>
        </authorList>
    </citation>
    <scope>CHROMOSOMAL ABERRATIONS</scope>
    <scope>GENERATION OF LB40 AND EB308</scope>
</reference>
<reference key="22">
    <citation type="journal article" date="1995" name="Nucleic Acids Res.">
        <title>Structural and functional characterization of the promoter regions of the NFKB2 gene.</title>
        <authorList>
            <person name="Lombardi L."/>
            <person name="Ciana P."/>
            <person name="Cappellini C."/>
            <person name="Trecca D."/>
            <person name="Guerrini L."/>
            <person name="Migliazza A."/>
            <person name="Maiolo A.T."/>
            <person name="Neri A."/>
        </authorList>
    </citation>
    <scope>CHARACTERIZATION OF THE TWO PROMOTER REGIONS</scope>
</reference>
<reference key="23">
    <citation type="journal article" date="2001" name="Oncogene">
        <title>The tumor suppressor protein menin interacts with NF-kappaB proteins and inhibits NF-kappaB-mediated transactivation.</title>
        <authorList>
            <person name="Heppner C."/>
            <person name="Bilimoria K.Y."/>
            <person name="Agarwal S.K."/>
            <person name="Kester M."/>
            <person name="Whitty L.J."/>
            <person name="Guru S.C."/>
            <person name="Chandrasekharappa S.C."/>
            <person name="Collins F.S."/>
            <person name="Spiegel A.M."/>
            <person name="Marx S.J."/>
            <person name="Burns A.L."/>
        </authorList>
    </citation>
    <scope>INTERACTION WITH MEN1</scope>
</reference>
<reference key="24">
    <citation type="journal article" date="2004" name="Oncogene">
        <title>Mechanism of processing of the NF-kappa B2 p100 precursor: identification of the specific polyubiquitin chain-anchoring lysine residue and analysis of the role of NEDD8-modification on the SCF(beta-TrCP) ubiquitin ligase.</title>
        <authorList>
            <person name="Amir R.E."/>
            <person name="Haecker H."/>
            <person name="Karin M."/>
            <person name="Ciechanover A."/>
        </authorList>
    </citation>
    <scope>UBIQUITINATION AT LYS-855</scope>
</reference>
<reference key="25">
    <citation type="journal article" date="2006" name="Proc. Natl. Acad. Sci. U.S.A.">
        <title>IL-1 receptor-associated kinase 1 is critical for latent membrane protein 1-induced p65/RelA serine 536 phosphorylation and NF-kappaB activation.</title>
        <authorList>
            <person name="Song Y.J."/>
            <person name="Jen K.Y."/>
            <person name="Soni V."/>
            <person name="Kieff E."/>
            <person name="Cahir-McFarland E."/>
        </authorList>
    </citation>
    <scope>IDENTIFICATION IN THE NF-KAPPA-B P65-P52 COMPLEX</scope>
</reference>
<reference key="26">
    <citation type="journal article" date="2008" name="Proc. Natl. Acad. Sci. U.S.A.">
        <title>A quantitative atlas of mitotic phosphorylation.</title>
        <authorList>
            <person name="Dephoure N."/>
            <person name="Zhou C."/>
            <person name="Villen J."/>
            <person name="Beausoleil S.A."/>
            <person name="Bakalarski C.E."/>
            <person name="Elledge S.J."/>
            <person name="Gygi S.P."/>
        </authorList>
    </citation>
    <scope>PHOSPHORYLATION [LARGE SCALE ANALYSIS] AT THR-429</scope>
    <scope>IDENTIFICATION BY MASS SPECTROMETRY [LARGE SCALE ANALYSIS]</scope>
    <source>
        <tissue>Cervix carcinoma</tissue>
    </source>
</reference>
<reference key="27">
    <citation type="journal article" date="2010" name="Sci. Signal.">
        <title>Quantitative phosphoproteomics reveals widespread full phosphorylation site occupancy during mitosis.</title>
        <authorList>
            <person name="Olsen J.V."/>
            <person name="Vermeulen M."/>
            <person name="Santamaria A."/>
            <person name="Kumar C."/>
            <person name="Miller M.L."/>
            <person name="Jensen L.J."/>
            <person name="Gnad F."/>
            <person name="Cox J."/>
            <person name="Jensen T.S."/>
            <person name="Nigg E.A."/>
            <person name="Brunak S."/>
            <person name="Mann M."/>
        </authorList>
    </citation>
    <scope>IDENTIFICATION BY MASS SPECTROMETRY [LARGE SCALE ANALYSIS]</scope>
    <source>
        <tissue>Cervix carcinoma</tissue>
    </source>
</reference>
<reference key="28">
    <citation type="journal article" date="2011" name="BMC Syst. Biol.">
        <title>Initial characterization of the human central proteome.</title>
        <authorList>
            <person name="Burkard T.R."/>
            <person name="Planyavsky M."/>
            <person name="Kaupe I."/>
            <person name="Breitwieser F.P."/>
            <person name="Buerckstuemmer T."/>
            <person name="Bennett K.L."/>
            <person name="Superti-Furga G."/>
            <person name="Colinge J."/>
        </authorList>
    </citation>
    <scope>IDENTIFICATION BY MASS SPECTROMETRY [LARGE SCALE ANALYSIS]</scope>
</reference>
<reference key="29">
    <citation type="journal article" date="2013" name="J. Proteome Res.">
        <title>Toward a comprehensive characterization of a human cancer cell phosphoproteome.</title>
        <authorList>
            <person name="Zhou H."/>
            <person name="Di Palma S."/>
            <person name="Preisinger C."/>
            <person name="Peng M."/>
            <person name="Polat A.N."/>
            <person name="Heck A.J."/>
            <person name="Mohammed S."/>
        </authorList>
    </citation>
    <scope>PHOSPHORYLATION [LARGE SCALE ANALYSIS] AT SER-23; SER-161 AND SER-812</scope>
    <scope>IDENTIFICATION BY MASS SPECTROMETRY [LARGE SCALE ANALYSIS]</scope>
    <source>
        <tissue>Cervix carcinoma</tissue>
        <tissue>Erythroleukemia</tissue>
    </source>
</reference>
<reference key="30">
    <citation type="journal article" date="2014" name="J. Proteomics">
        <title>An enzyme assisted RP-RPLC approach for in-depth analysis of human liver phosphoproteome.</title>
        <authorList>
            <person name="Bian Y."/>
            <person name="Song C."/>
            <person name="Cheng K."/>
            <person name="Dong M."/>
            <person name="Wang F."/>
            <person name="Huang J."/>
            <person name="Sun D."/>
            <person name="Wang L."/>
            <person name="Ye M."/>
            <person name="Zou H."/>
        </authorList>
    </citation>
    <scope>IDENTIFICATION BY MASS SPECTROMETRY [LARGE SCALE ANALYSIS]</scope>
    <source>
        <tissue>Liver</tissue>
    </source>
</reference>
<reference key="31">
    <citation type="journal article" date="1997" name="EMBO J.">
        <title>Structure of the human NF-kappaB p52 homodimer-DNA complex at 2.1-A resolution.</title>
        <authorList>
            <person name="Cramer P."/>
            <person name="Larson C.J."/>
            <person name="Verdine G.L."/>
            <person name="Mueller C.W."/>
        </authorList>
    </citation>
    <scope>X-RAY CRYSTALLOGRAPHY (2.1 ANGSTROMS) OF 37-327</scope>
</reference>
<reference key="32">
    <citation type="submission" date="2006-12" db="PDB data bank">
        <title>Solution structure of the death domain of nuclear factor NF-kappa-B p100.</title>
        <authorList>
            <consortium name="RIKEN structural genomics initiative (RSGI)"/>
        </authorList>
    </citation>
    <scope>STRUCTURE BY NMR OF 764-859</scope>
</reference>
<reference key="33">
    <citation type="journal article" date="2013" name="Am. J. Hum. Genet.">
        <title>Germline mutations in NFKB2 implicate the noncanonical NF-kappaB pathway in the pathogenesis of common variable immunodeficiency.</title>
        <authorList>
            <person name="Chen K."/>
            <person name="Coonrod E.M."/>
            <person name="Kumanovics A."/>
            <person name="Franks Z.F."/>
            <person name="Durtschi J.D."/>
            <person name="Margraf R.L."/>
            <person name="Wu W."/>
            <person name="Heikal N.M."/>
            <person name="Augustine N.H."/>
            <person name="Ridge P.G."/>
            <person name="Hill H.R."/>
            <person name="Jorde L.B."/>
            <person name="Weyrich A.S."/>
            <person name="Zimmerman G.A."/>
            <person name="Gundlapalli A.V."/>
            <person name="Bohnsack J.F."/>
            <person name="Voelkerding K.V."/>
        </authorList>
    </citation>
    <scope>INVOLVEMENT IN CVID10</scope>
</reference>
<reference key="34">
    <citation type="journal article" date="2023" name="Sci. Signal.">
        <title>TRIM55 promotes noncanonical NF-kappaB signaling and B cell-mediated immune responses by coordinating p100 ubiquitination and processing.</title>
        <authorList>
            <person name="Lin L."/>
            <person name="Yu H."/>
            <person name="Li L."/>
            <person name="Yang W."/>
            <person name="Chen X."/>
            <person name="Gong Y."/>
            <person name="Lei Q."/>
            <person name="Li Z."/>
            <person name="Zhou Z."/>
            <person name="Dai L."/>
            <person name="Zhang H."/>
            <person name="Hu H."/>
        </authorList>
    </citation>
    <scope>UBIQUITINATION BY TRIM55</scope>
</reference>
<reference key="35">
    <citation type="journal article" date="2014" name="BMC Med. Genet.">
        <title>Mutations in NFKB2 and potential genetic heterogeneity in patients with DAVID syndrome, having variable endocrine and immune deficiencies.</title>
        <authorList>
            <person name="Brue T."/>
            <person name="Quentien M.H."/>
            <person name="Khetchoumian K."/>
            <person name="Bensa M."/>
            <person name="Capo-Chichi J.M."/>
            <person name="Delemer B."/>
            <person name="Balsalobre A."/>
            <person name="Nassif C."/>
            <person name="Papadimitriou D.T."/>
            <person name="Pagnier A."/>
            <person name="Hasselmann C."/>
            <person name="Patry L."/>
            <person name="Schwartzentruber J."/>
            <person name="Souchon P.F."/>
            <person name="Takayasu S."/>
            <person name="Enjalbert A."/>
            <person name="Van Vliet G."/>
            <person name="Majewski J."/>
            <person name="Drouin J."/>
            <person name="Samuels M.E."/>
        </authorList>
    </citation>
    <scope>VARIANTS CVID10 GLY-865 AND VAL-867</scope>
</reference>
<gene>
    <name type="primary">NFKB2</name>
    <name type="synonym">LYT10</name>
</gene>
<organism>
    <name type="scientific">Homo sapiens</name>
    <name type="common">Human</name>
    <dbReference type="NCBI Taxonomy" id="9606"/>
    <lineage>
        <taxon>Eukaryota</taxon>
        <taxon>Metazoa</taxon>
        <taxon>Chordata</taxon>
        <taxon>Craniata</taxon>
        <taxon>Vertebrata</taxon>
        <taxon>Euteleostomi</taxon>
        <taxon>Mammalia</taxon>
        <taxon>Eutheria</taxon>
        <taxon>Euarchontoglires</taxon>
        <taxon>Primates</taxon>
        <taxon>Haplorrhini</taxon>
        <taxon>Catarrhini</taxon>
        <taxon>Hominidae</taxon>
        <taxon>Homo</taxon>
    </lineage>
</organism>
<accession>Q00653</accession>
<accession>A8K9D9</accession>
<accession>D3DR83</accession>
<accession>Q04860</accession>
<accession>Q9BU75</accession>
<accession>Q9H471</accession>
<accession>Q9H472</accession>
<name>NFKB2_HUMAN</name>
<keyword id="KW-0002">3D-structure</keyword>
<keyword id="KW-0010">Activator</keyword>
<keyword id="KW-0025">Alternative splicing</keyword>
<keyword id="KW-0040">ANK repeat</keyword>
<keyword id="KW-0090">Biological rhythms</keyword>
<keyword id="KW-0160">Chromosomal rearrangement</keyword>
<keyword id="KW-0963">Cytoplasm</keyword>
<keyword id="KW-0903">Direct protein sequencing</keyword>
<keyword id="KW-0225">Disease variant</keyword>
<keyword id="KW-0238">DNA-binding</keyword>
<keyword id="KW-1017">Isopeptide bond</keyword>
<keyword id="KW-0539">Nucleus</keyword>
<keyword id="KW-0597">Phosphoprotein</keyword>
<keyword id="KW-1267">Proteomics identification</keyword>
<keyword id="KW-0656">Proto-oncogene</keyword>
<keyword id="KW-1185">Reference proteome</keyword>
<keyword id="KW-0677">Repeat</keyword>
<keyword id="KW-0678">Repressor</keyword>
<keyword id="KW-0804">Transcription</keyword>
<keyword id="KW-0805">Transcription regulation</keyword>
<keyword id="KW-0832">Ubl conjugation</keyword>
<proteinExistence type="evidence at protein level"/>
<feature type="chain" id="PRO_0000030321" description="Nuclear factor NF-kappa-B p100 subunit">
    <location>
        <begin position="1"/>
        <end position="900"/>
    </location>
</feature>
<feature type="chain" id="PRO_0000030322" description="Nuclear factor NF-kappa-B p52 subunit">
    <location>
        <begin position="1"/>
        <end position="454"/>
    </location>
</feature>
<feature type="domain" description="RHD" evidence="3">
    <location>
        <begin position="38"/>
        <end position="343"/>
    </location>
</feature>
<feature type="repeat" description="ANK 1">
    <location>
        <begin position="487"/>
        <end position="519"/>
    </location>
</feature>
<feature type="repeat" description="ANK 2">
    <location>
        <begin position="526"/>
        <end position="555"/>
    </location>
</feature>
<feature type="repeat" description="ANK 3">
    <location>
        <begin position="559"/>
        <end position="591"/>
    </location>
</feature>
<feature type="repeat" description="ANK 4">
    <location>
        <begin position="599"/>
        <end position="628"/>
    </location>
</feature>
<feature type="repeat" description="ANK 5">
    <location>
        <begin position="633"/>
        <end position="663"/>
    </location>
</feature>
<feature type="repeat" description="ANK 6">
    <location>
        <begin position="667"/>
        <end position="696"/>
    </location>
</feature>
<feature type="repeat" description="ANK 7">
    <location>
        <begin position="729"/>
        <end position="758"/>
    </location>
</feature>
<feature type="domain" description="Death">
    <location>
        <begin position="764"/>
        <end position="851"/>
    </location>
</feature>
<feature type="region of interest" description="GRR">
    <location>
        <begin position="346"/>
        <end position="377"/>
    </location>
</feature>
<feature type="region of interest" description="Disordered" evidence="4">
    <location>
        <begin position="404"/>
        <end position="435"/>
    </location>
</feature>
<feature type="region of interest" description="Disordered" evidence="4">
    <location>
        <begin position="698"/>
        <end position="734"/>
    </location>
</feature>
<feature type="region of interest" description="Disordered" evidence="4">
    <location>
        <begin position="849"/>
        <end position="900"/>
    </location>
</feature>
<feature type="short sequence motif" description="Nuclear localization signal" evidence="2">
    <location>
        <begin position="337"/>
        <end position="341"/>
    </location>
</feature>
<feature type="compositionally biased region" description="Basic and acidic residues" evidence="4">
    <location>
        <begin position="849"/>
        <end position="866"/>
    </location>
</feature>
<feature type="compositionally biased region" description="Low complexity" evidence="4">
    <location>
        <begin position="888"/>
        <end position="900"/>
    </location>
</feature>
<feature type="site" description="Cleavage (when cotranslationally processed)">
    <location>
        <begin position="454"/>
        <end position="455"/>
    </location>
</feature>
<feature type="site" description="Breakpoint for translocation to form NFKB2-IGHA1 oncogene">
    <location>
        <begin position="490"/>
        <end position="491"/>
    </location>
</feature>
<feature type="modified residue" description="Phosphoserine" evidence="24">
    <location>
        <position position="23"/>
    </location>
</feature>
<feature type="modified residue" description="Phosphoserine" evidence="24">
    <location>
        <position position="161"/>
    </location>
</feature>
<feature type="modified residue" description="Phosphothreonine" evidence="23">
    <location>
        <position position="429"/>
    </location>
</feature>
<feature type="modified residue" description="Phosphoserine" evidence="15">
    <location>
        <position position="713"/>
    </location>
</feature>
<feature type="modified residue" description="Phosphoserine" evidence="15">
    <location>
        <position position="715"/>
    </location>
</feature>
<feature type="modified residue" description="Phosphoserine" evidence="15">
    <location>
        <position position="717"/>
    </location>
</feature>
<feature type="modified residue" description="Phosphoserine" evidence="24">
    <location>
        <position position="812"/>
    </location>
</feature>
<feature type="modified residue" description="Phosphoserine; by MAP3K14" evidence="5">
    <location>
        <position position="866"/>
    </location>
</feature>
<feature type="modified residue" description="Phosphoserine; by MAP3K14" evidence="5">
    <location>
        <position position="870"/>
    </location>
</feature>
<feature type="cross-link" description="Glycyl lysine isopeptide (Lys-Gly) (interchain with G-Cter in ubiquitin)" evidence="7">
    <location>
        <position position="855"/>
    </location>
</feature>
<feature type="splice variant" id="VSP_040082" description="In isoform 3." evidence="20">
    <original>GSLGFFPSSLAYSPYQSGAGPMGCYPGGGGGAQMAATVPSRDSGEEAAEPSAPSR</original>
    <variation>EGVLMEGGVKVREAVEEKNLGEAGRGLHACNPALWEAKAGRLPEIRSSRPAWPTA</variation>
    <location>
        <begin position="374"/>
        <end position="428"/>
    </location>
</feature>
<feature type="splice variant" id="VSP_040083" description="In isoform 3." evidence="20">
    <location>
        <begin position="429"/>
        <end position="900"/>
    </location>
</feature>
<feature type="splice variant" id="VSP_040084" description="In isoform 4." evidence="18 19 20 21">
    <location>
        <position position="860"/>
    </location>
</feature>
<feature type="sequence variant" id="VAR_022223" description="In dbSNP:rs45581936." evidence="17">
    <original>E</original>
    <variation>K</variation>
    <location>
        <position position="14"/>
    </location>
</feature>
<feature type="sequence variant" id="VAR_022224" description="In dbSNP:rs45580031." evidence="17">
    <original>G</original>
    <variation>R</variation>
    <location>
        <position position="351"/>
    </location>
</feature>
<feature type="sequence variant" id="VAR_051781" description="In dbSNP:rs11574848.">
    <original>A</original>
    <variation>G</variation>
    <location>
        <position position="392"/>
    </location>
</feature>
<feature type="sequence variant" id="VAR_022225" description="In dbSNP:rs45471103." evidence="17">
    <original>G</original>
    <variation>R</variation>
    <location>
        <position position="452"/>
    </location>
</feature>
<feature type="sequence variant" id="VAR_018452" description="In truncated form EB308.">
    <location>
        <begin position="618"/>
        <end position="900"/>
    </location>
</feature>
<feature type="sequence variant" id="VAR_006909" description="In truncated form p80HT.">
    <original>AGN</original>
    <variation>SAS</variation>
    <location>
        <begin position="667"/>
        <end position="669"/>
    </location>
</feature>
<feature type="sequence variant" id="VAR_006910" description="In truncated form p80HT.">
    <location>
        <begin position="670"/>
        <end position="900"/>
    </location>
</feature>
<feature type="sequence variant" id="VAR_018453" description="In truncated form LB40.">
    <location>
        <begin position="703"/>
        <end position="900"/>
    </location>
</feature>
<feature type="sequence variant" id="VAR_074035" description="In CVID10; uncertain significance; de novo mutation; dbSNP:rs727502787." evidence="10">
    <original>D</original>
    <variation>G</variation>
    <location>
        <position position="865"/>
    </location>
</feature>
<feature type="sequence variant" id="VAR_074036" description="In CVID10; uncertain significance; de novo mutation; dbSNP:rs727502788." evidence="10">
    <original>A</original>
    <variation>V</variation>
    <location>
        <position position="867"/>
    </location>
</feature>
<feature type="mutagenesis site" description="Two-fold reduction in heterodimerization with RelA." evidence="15">
    <original>YLL</original>
    <variation>AAA</variation>
    <location>
        <begin position="247"/>
        <end position="249"/>
    </location>
</feature>
<feature type="mutagenesis site" description="No change in cleavage rate or products." evidence="15">
    <original>P</original>
    <variation>A</variation>
    <location>
        <position position="399"/>
    </location>
</feature>
<feature type="mutagenesis site" description="No change in cleavage rate or products." evidence="15">
    <original>G</original>
    <variation>A</variation>
    <location>
        <position position="404"/>
    </location>
</feature>
<feature type="mutagenesis site" description="No change in cleavage rate or products." evidence="15">
    <original>A</original>
    <variation>P</variation>
    <location>
        <position position="405"/>
    </location>
</feature>
<feature type="mutagenesis site" description="No change in cleavage rate or products." evidence="15">
    <original>Q</original>
    <variation>N</variation>
    <location>
        <position position="406"/>
    </location>
</feature>
<feature type="mutagenesis site" description="Loss of phosphorylation; when associated with A-715 and A-717." evidence="15">
    <original>S</original>
    <variation>G</variation>
    <location>
        <position position="713"/>
    </location>
</feature>
<feature type="mutagenesis site" description="Loss of phosphorylation; when associated with G-713 and A-717." evidence="15">
    <original>S</original>
    <variation>A</variation>
    <location>
        <position position="715"/>
    </location>
</feature>
<feature type="mutagenesis site" description="Loss of phosphorylation; when associated with G-713 and A-715." evidence="15">
    <original>S</original>
    <variation>A</variation>
    <location>
        <position position="717"/>
    </location>
</feature>
<feature type="mutagenesis site" description="Decrease in MAP3K14-induced phosphorylation; no inducible processing occurs; when associated with A-869." evidence="5">
    <original>S</original>
    <variation>A</variation>
    <location>
        <position position="866"/>
    </location>
</feature>
<feature type="mutagenesis site" description="Decrease in MAP3K14-induced phosphorylation; no inducible processing occurs; when associated with A-865." evidence="5">
    <original>S</original>
    <variation>A</variation>
    <location>
        <position position="870"/>
    </location>
</feature>
<feature type="sequence conflict" description="In Ref. 2; AAB21124." evidence="22" ref="2">
    <original>K</original>
    <variation>E</variation>
    <location>
        <position position="144"/>
    </location>
</feature>
<feature type="sequence conflict" description="In Ref. 1; CAA43715/CAA43716 and 11; AAA68171." evidence="22" ref="1 11">
    <original>I</original>
    <variation>T</variation>
    <location>
        <position position="213"/>
    </location>
</feature>
<feature type="sequence conflict" description="In Ref. 1; CAA43715." evidence="22" ref="1">
    <original>G</original>
    <variation>R</variation>
    <location>
        <position position="396"/>
    </location>
</feature>
<feature type="sequence conflict" description="In Ref. 2; AAB21124." evidence="22" ref="2">
    <original>EP</original>
    <variation>DA</variation>
    <location>
        <begin position="433"/>
        <end position="434"/>
    </location>
</feature>
<feature type="sequence conflict" description="In Ref. 12; AA sequence." evidence="22" ref="12">
    <original>R</original>
    <variation>K</variation>
    <location>
        <position position="459"/>
    </location>
</feature>
<feature type="sequence conflict" description="In Ref. 1; CAA43715." evidence="22" ref="1">
    <original>G</original>
    <variation>C</variation>
    <location>
        <position position="465"/>
    </location>
</feature>
<feature type="sequence conflict" description="In Ref. 1; CAA43715 and 2; AAB21124." evidence="22" ref="1 2">
    <original>A</original>
    <variation>R</variation>
    <location>
        <position position="470"/>
    </location>
</feature>
<feature type="sequence conflict" description="In Ref. 1; CAA43715." evidence="22" ref="1">
    <original>K</original>
    <variation>L</variation>
    <location>
        <position position="741"/>
    </location>
</feature>
<feature type="sequence conflict" description="In Ref. 2; AAB21124." evidence="22" ref="2">
    <original>A</original>
    <variation>T</variation>
    <location>
        <position position="860"/>
    </location>
</feature>
<feature type="sequence conflict" description="In Ref. 2; AAB21124." evidence="22" ref="2">
    <original>E</original>
    <variation>K</variation>
    <location>
        <position position="876"/>
    </location>
</feature>
<feature type="sequence conflict" description="In Ref. 1; CAA43715." evidence="22" ref="1">
    <original>C</original>
    <variation>S</variation>
    <location>
        <position position="891"/>
    </location>
</feature>
<feature type="strand" evidence="30">
    <location>
        <begin position="35"/>
        <end position="37"/>
    </location>
</feature>
<feature type="strand" evidence="25">
    <location>
        <begin position="39"/>
        <end position="44"/>
    </location>
</feature>
<feature type="strand" evidence="25">
    <location>
        <begin position="48"/>
        <end position="51"/>
    </location>
</feature>
<feature type="turn" evidence="25">
    <location>
        <begin position="56"/>
        <end position="58"/>
    </location>
</feature>
<feature type="strand" evidence="30">
    <location>
        <begin position="72"/>
        <end position="74"/>
    </location>
</feature>
<feature type="strand" evidence="25">
    <location>
        <begin position="79"/>
        <end position="83"/>
    </location>
</feature>
<feature type="strand" evidence="25">
    <location>
        <begin position="87"/>
        <end position="96"/>
    </location>
</feature>
<feature type="strand" evidence="25">
    <location>
        <begin position="98"/>
        <end position="101"/>
    </location>
</feature>
<feature type="strand" evidence="25">
    <location>
        <begin position="106"/>
        <end position="111"/>
    </location>
</feature>
<feature type="strand" evidence="30">
    <location>
        <begin position="116"/>
        <end position="118"/>
    </location>
</feature>
<feature type="strand" evidence="25">
    <location>
        <begin position="120"/>
        <end position="124"/>
    </location>
</feature>
<feature type="strand" evidence="25">
    <location>
        <begin position="130"/>
        <end position="132"/>
    </location>
</feature>
<feature type="strand" evidence="25">
    <location>
        <begin position="136"/>
        <end position="140"/>
    </location>
</feature>
<feature type="turn" evidence="25">
    <location>
        <begin position="143"/>
        <end position="145"/>
    </location>
</feature>
<feature type="helix" evidence="25">
    <location>
        <begin position="146"/>
        <end position="158"/>
    </location>
</feature>
<feature type="turn" evidence="25">
    <location>
        <begin position="159"/>
        <end position="161"/>
    </location>
</feature>
<feature type="helix" evidence="25">
    <location>
        <begin position="168"/>
        <end position="182"/>
    </location>
</feature>
<feature type="strand" evidence="25">
    <location>
        <begin position="189"/>
        <end position="198"/>
    </location>
</feature>
<feature type="strand" evidence="29">
    <location>
        <begin position="201"/>
        <end position="203"/>
    </location>
</feature>
<feature type="strand" evidence="27">
    <location>
        <begin position="205"/>
        <end position="207"/>
    </location>
</feature>
<feature type="strand" evidence="25">
    <location>
        <begin position="217"/>
        <end position="219"/>
    </location>
</feature>
<feature type="strand" evidence="27">
    <location>
        <begin position="220"/>
        <end position="222"/>
    </location>
</feature>
<feature type="turn" evidence="25">
    <location>
        <begin position="223"/>
        <end position="225"/>
    </location>
</feature>
<feature type="strand" evidence="25">
    <location>
        <begin position="230"/>
        <end position="234"/>
    </location>
</feature>
<feature type="strand" evidence="25">
    <location>
        <begin position="236"/>
        <end position="239"/>
    </location>
</feature>
<feature type="strand" evidence="27">
    <location>
        <begin position="240"/>
        <end position="242"/>
    </location>
</feature>
<feature type="strand" evidence="25">
    <location>
        <begin position="245"/>
        <end position="252"/>
    </location>
</feature>
<feature type="turn" evidence="25">
    <location>
        <begin position="255"/>
        <end position="257"/>
    </location>
</feature>
<feature type="strand" evidence="25">
    <location>
        <begin position="258"/>
        <end position="264"/>
    </location>
</feature>
<feature type="strand" evidence="25">
    <location>
        <begin position="266"/>
        <end position="268"/>
    </location>
</feature>
<feature type="strand" evidence="25">
    <location>
        <begin position="270"/>
        <end position="273"/>
    </location>
</feature>
<feature type="helix" evidence="25">
    <location>
        <begin position="278"/>
        <end position="280"/>
    </location>
</feature>
<feature type="turn" evidence="25">
    <location>
        <begin position="283"/>
        <end position="285"/>
    </location>
</feature>
<feature type="strand" evidence="25">
    <location>
        <begin position="286"/>
        <end position="290"/>
    </location>
</feature>
<feature type="strand" evidence="25">
    <location>
        <begin position="303"/>
        <end position="311"/>
    </location>
</feature>
<feature type="turn" evidence="25">
    <location>
        <begin position="312"/>
        <end position="314"/>
    </location>
</feature>
<feature type="strand" evidence="25">
    <location>
        <begin position="321"/>
        <end position="326"/>
    </location>
</feature>
<feature type="helix" evidence="28">
    <location>
        <begin position="439"/>
        <end position="467"/>
    </location>
</feature>
<feature type="helix" evidence="28">
    <location>
        <begin position="470"/>
        <end position="475"/>
    </location>
</feature>
<feature type="helix" evidence="28">
    <location>
        <begin position="476"/>
        <end position="480"/>
    </location>
</feature>
<feature type="helix" evidence="28">
    <location>
        <begin position="491"/>
        <end position="497"/>
    </location>
</feature>
<feature type="helix" evidence="28">
    <location>
        <begin position="501"/>
        <end position="512"/>
    </location>
</feature>
<feature type="turn" evidence="28">
    <location>
        <begin position="513"/>
        <end position="515"/>
    </location>
</feature>
<feature type="helix" evidence="28">
    <location>
        <begin position="519"/>
        <end position="521"/>
    </location>
</feature>
<feature type="helix" evidence="28">
    <location>
        <begin position="530"/>
        <end position="536"/>
    </location>
</feature>
<feature type="helix" evidence="28">
    <location>
        <begin position="540"/>
        <end position="548"/>
    </location>
</feature>
<feature type="helix" evidence="28">
    <location>
        <begin position="563"/>
        <end position="567"/>
    </location>
</feature>
<feature type="helix" evidence="28">
    <location>
        <begin position="575"/>
        <end position="582"/>
    </location>
</feature>
<feature type="helix" evidence="28">
    <location>
        <begin position="586"/>
        <end position="588"/>
    </location>
</feature>
<feature type="turn" evidence="28">
    <location>
        <begin position="589"/>
        <end position="593"/>
    </location>
</feature>
<feature type="turn" evidence="28">
    <location>
        <begin position="597"/>
        <end position="599"/>
    </location>
</feature>
<feature type="helix" evidence="28">
    <location>
        <begin position="603"/>
        <end position="609"/>
    </location>
</feature>
<feature type="helix" evidence="28">
    <location>
        <begin position="613"/>
        <end position="621"/>
    </location>
</feature>
<feature type="turn" evidence="28">
    <location>
        <begin position="631"/>
        <end position="633"/>
    </location>
</feature>
<feature type="helix" evidence="28">
    <location>
        <begin position="637"/>
        <end position="643"/>
    </location>
</feature>
<feature type="helix" evidence="28">
    <location>
        <begin position="647"/>
        <end position="654"/>
    </location>
</feature>
<feature type="turn" evidence="28">
    <location>
        <begin position="655"/>
        <end position="657"/>
    </location>
</feature>
<feature type="helix" evidence="28">
    <location>
        <begin position="671"/>
        <end position="678"/>
    </location>
</feature>
<feature type="helix" evidence="28">
    <location>
        <begin position="681"/>
        <end position="689"/>
    </location>
</feature>
<feature type="turn" evidence="28">
    <location>
        <begin position="733"/>
        <end position="735"/>
    </location>
</feature>
<feature type="helix" evidence="28">
    <location>
        <begin position="740"/>
        <end position="751"/>
    </location>
</feature>
<feature type="strand" evidence="28">
    <location>
        <begin position="752"/>
        <end position="754"/>
    </location>
</feature>
<feature type="helix" evidence="26">
    <location>
        <begin position="772"/>
        <end position="782"/>
    </location>
</feature>
<feature type="strand" evidence="26">
    <location>
        <begin position="783"/>
        <end position="786"/>
    </location>
</feature>
<feature type="helix" evidence="26">
    <location>
        <begin position="791"/>
        <end position="798"/>
    </location>
</feature>
<feature type="helix" evidence="26">
    <location>
        <begin position="801"/>
        <end position="808"/>
    </location>
</feature>
<feature type="helix" evidence="26">
    <location>
        <begin position="813"/>
        <end position="823"/>
    </location>
</feature>
<feature type="helix" evidence="26">
    <location>
        <begin position="828"/>
        <end position="838"/>
    </location>
</feature>
<feature type="helix" evidence="26">
    <location>
        <begin position="841"/>
        <end position="848"/>
    </location>
</feature>